<name>MICA_HUMAN</name>
<comment type="function">
    <text evidence="7 12 15 16 33">Widely expressed membrane-bound protein which acts as a ligand to stimulate an activating receptor KLRK1/NKG2D, expressed on the surface of essentially all human natural killer (NK), gammadelta T and CD8 alphabeta T-cells (PubMed:11491531, PubMed:11777960). Up-regulated in stressed conditions, such as viral and bacterial infections or DNA damage response, serves as signal of cellular stress, and engagement of KLRK1/NKG2D by MICA triggers NK-cells resulting in a range of immune effector functions, such as cytotoxicity and cytokine production (PubMed:10426993).</text>
</comment>
<comment type="subunit">
    <text evidence="7 8 13 15 24 31 32">Unlike classical MHC class I molecules, does not form a heterodimer with beta-2-microglobulin. Binds as a monomer to a KLRK1/NKG2D homodimer. KLRK1 forms a complex with HCST/DAP10 in which KLRK1 binds MICA while HCST acts as an adapter molecule which enables signal transduction. Interacts with PDIA6 on the surface of tumor cells, leading to disulfide bond reduction which is required for release of MICA from tumor cells.</text>
</comment>
<comment type="subunit">
    <text evidence="28">(Microbial infection) Interacts with human cytomegalovirus/HHV-5 protein UL142.</text>
</comment>
<comment type="interaction">
    <interactant intactId="EBI-1031130">
        <id>Q29983</id>
    </interactant>
    <interactant intactId="EBI-458344">
        <id>P26718</id>
        <label>KLRK1</label>
    </interactant>
    <organismsDiffer>false</organismsDiffer>
    <experiments>2</experiments>
</comment>
<comment type="interaction">
    <interactant intactId="EBI-1031130">
        <id>Q29983</id>
    </interactant>
    <interactant intactId="EBI-1170392">
        <id>P17931</id>
        <label>LGALS3</label>
    </interactant>
    <organismsDiffer>false</organismsDiffer>
    <experiments>2</experiments>
</comment>
<comment type="subcellular location">
    <subcellularLocation>
        <location evidence="5 27 29 31">Cell membrane</location>
        <topology evidence="5 27 31">Single-pass type I membrane protein</topology>
    </subcellularLocation>
    <subcellularLocation>
        <location evidence="5 27 31">Cytoplasm</location>
    </subcellularLocation>
    <text evidence="5 27 31">Expressed on the cell surface in gastric epithelium, endothelial cells and fibroblasts and in the cytoplasm in keratinocytes and monocytes. Infection with human adenovirus 5 suppresses cell surface expression due to the adenoviral E3-19K protein which causes retention in the endoplasmic reticulum.</text>
</comment>
<comment type="alternative products">
    <event type="alternative splicing"/>
    <isoform>
        <id>Q29983-1</id>
        <name evidence="20">1</name>
        <name evidence="20">MICA1</name>
        <sequence type="displayed"/>
    </isoform>
    <isoform>
        <id>Q29983-2</id>
        <name evidence="20">2</name>
        <name evidence="20">MICA2</name>
        <sequence type="described" ref="VSP_055366"/>
    </isoform>
</comment>
<comment type="tissue specificity">
    <text evidence="4 5 9 21 25 31 32">Widely expressed with the exception of the central nervous system where it is absent. Expressed predominantly in gastric epithelium and also in monocytes, keratinocytes, endothelial cells, fibroblasts and in the outer layer of Hassal's corpuscles within the medulla of normal thymus. In skin, expressed mainly in the keratin layers, basal cells, ducts and follicles. Also expressed in many, but not all, epithelial tumors of lung, breast, kidney, ovary, prostate and colon. In thyomas, overexpressed in cortical and medullar epithelial cells. Tumors expressing MICA display increased levels of gamma delta T-cells.</text>
</comment>
<comment type="induction">
    <text evidence="12 14 17 22 23 27 31 33">By heat shock, by infection with human cytomegalovirus (HCMV), human adenovirus 5, M.tuberculosis and diarrheagenic E.coli, and by exposure to DNA damaging conditions such as high doses of ionizing radiation, chromatin-modifying treatments and inhibitors of DNA replication. The HCMV UL142 protein causes down-regulation of the full-length protein but not of the truncated MICA*008 allele.</text>
</comment>
<comment type="PTM">
    <text evidence="31">N-glycosylated. Glycosylation is not essential for interaction with KLRK1/NKG2D but enhances complex formation.</text>
</comment>
<comment type="PTM">
    <text evidence="18 19">Proteolytically cleaved and released from the cell surface of tumor cells which impairs KLRK1/NKG2D expression and T-cell activation.</text>
</comment>
<comment type="PTM">
    <text evidence="29">Palmitoylated on cysteine residues in the cytoplasmic tail leading to its association with membrane microdomains enriched in cholesterol.</text>
</comment>
<comment type="PTM">
    <text evidence="30">N-glycosylation is necessary for cell surface expression.</text>
</comment>
<comment type="PTM">
    <text evidence="26">(Microbial infection) Ubiquitinated by human herpesvirus 8 protein K5, leading to degradation.</text>
</comment>
<comment type="polymorphism">
    <text evidence="36">The following alleles of MICA are known: MICA*001, MICA*002, MICA*004, MICA*005, MICA*006, MICA*007, MICA*008, MICA*009, MICA*010, MICA*011, MICA*012, MICA*013, MICA*014, MICA*015, MICA*016, MICA*017, MICA*018, MICA*019, MICA*020, MICA*022, MICA*023, MICA*024, MICA*025, MICA*026, MICA*027, MICA*028, MICA*029, MICA*030, MICA*031, MICA*032, MICA*033, MICA*034, MICA*035, MICA*036, MICA*037, MICA*038, MICA*039, MICA*040, MICA*041, MICA*042, MICA*043, MICA*044, MICA*045, MICA*046, MICA*047, MICA*048, MICA*049, MICA*050, MICA*051, MICA*052, MICA*053, MICA*054, MICA*055 and MICA*056. The sequence shown is that of MICA*001.</text>
</comment>
<comment type="disease">
    <text>Anti-MICA antibodies and ligand shedding are involved in the progression of monoclonal gammopathy of undetermined significance (MGUS)to multiple myeloma.</text>
</comment>
<comment type="disease">
    <disease id="DI-02231">
        <name>Psoriasis 1</name>
        <acronym>PSORS1</acronym>
        <description>A common, chronic inflammatory disease of the skin with multifactorial etiology. It is characterized by red, scaly plaques usually found on the scalp, elbows and knees. These lesions are caused by abnormal keratinocyte proliferation and infiltration of inflammatory cells into the dermis and epidermis.</description>
        <dbReference type="MIM" id="177900"/>
    </disease>
    <text>Disease susceptibility is associated with variants affecting the gene represented in this entry.</text>
</comment>
<comment type="disease" evidence="3">
    <disease id="DI-02697">
        <name>Psoriatic arthritis</name>
        <acronym>PSORAS</acronym>
        <description>An inflammatory, seronegative arthritis associated with psoriasis. It is a heterogeneous disorder ranging from a mild, non-destructive disease to a severe, progressive, erosive arthropathy. Five types of psoriatic arthritis have been defined: asymmetrical oligoarthritis characterized by primary involvement of the small joints of the fingers or toes; asymmetrical arthritis which involves the joints of the extremities; symmetrical polyarthritis characterized by a rheumatoid like pattern that can involve hands, wrists, ankles, and feet; arthritis mutilans, which is a rare but deforming and destructive condition; arthritis of the sacroiliac joints and spine (psoriatic spondylitis).</description>
        <dbReference type="MIM" id="607507"/>
    </disease>
    <text>Disease susceptibility is associated with variants affecting the gene represented in this entry.</text>
</comment>
<comment type="miscellaneous">
    <text evidence="11">Recognized by antibodies in the sera of some organ transplant recipients and may be a target molecule in allograft rejection.</text>
</comment>
<comment type="miscellaneous">
    <molecule>Isoform 2</molecule>
    <text evidence="36">Found in about 10% of examined clones.</text>
</comment>
<comment type="similarity">
    <text evidence="1">Belongs to the MHC class I family. MIC subfamily.</text>
</comment>
<proteinExistence type="evidence at protein level"/>
<dbReference type="EMBL" id="L14848">
    <property type="protein sequence ID" value="AAA21718.1"/>
    <property type="molecule type" value="mRNA"/>
</dbReference>
<dbReference type="EMBL" id="X92841">
    <property type="protein sequence ID" value="CAA63427.1"/>
    <property type="molecule type" value="Genomic_DNA"/>
</dbReference>
<dbReference type="EMBL" id="AL845443">
    <property type="protein sequence ID" value="CAI41907.1"/>
    <property type="molecule type" value="Genomic_DNA"/>
</dbReference>
<dbReference type="EMBL" id="CR847852">
    <property type="protein sequence ID" value="CAQ11015.1"/>
    <property type="molecule type" value="Genomic_DNA"/>
</dbReference>
<dbReference type="EMBL" id="BC016929">
    <property type="protein sequence ID" value="AAH16929.1"/>
    <property type="molecule type" value="mRNA"/>
</dbReference>
<dbReference type="EMBL" id="BG114064">
    <property type="status" value="NOT_ANNOTATED_CDS"/>
    <property type="molecule type" value="mRNA"/>
</dbReference>
<dbReference type="EMBL" id="L29406">
    <property type="status" value="NOT_ANNOTATED_CDS"/>
    <property type="molecule type" value="Genomic_DNA"/>
</dbReference>
<dbReference type="EMBL" id="L29408">
    <property type="status" value="NOT_ANNOTATED_CDS"/>
    <property type="molecule type" value="Genomic_DNA"/>
</dbReference>
<dbReference type="EMBL" id="L29409">
    <property type="status" value="NOT_ANNOTATED_CDS"/>
    <property type="molecule type" value="Genomic_DNA"/>
</dbReference>
<dbReference type="EMBL" id="L29411">
    <property type="status" value="NOT_ANNOTATED_CDS"/>
    <property type="molecule type" value="Genomic_DNA"/>
</dbReference>
<dbReference type="EMBL" id="U56940">
    <property type="protein sequence ID" value="AAB41060.1"/>
    <property type="molecule type" value="Genomic_DNA"/>
</dbReference>
<dbReference type="EMBL" id="U56941">
    <property type="protein sequence ID" value="AAB41061.1"/>
    <property type="molecule type" value="Genomic_DNA"/>
</dbReference>
<dbReference type="EMBL" id="U56942">
    <property type="protein sequence ID" value="AAB41062.1"/>
    <property type="molecule type" value="Genomic_DNA"/>
</dbReference>
<dbReference type="EMBL" id="U56943">
    <property type="protein sequence ID" value="AAB41063.1"/>
    <property type="molecule type" value="Genomic_DNA"/>
</dbReference>
<dbReference type="EMBL" id="U56944">
    <property type="protein sequence ID" value="AAB41064.1"/>
    <property type="molecule type" value="Genomic_DNA"/>
</dbReference>
<dbReference type="EMBL" id="U56945">
    <property type="protein sequence ID" value="AAB41065.1"/>
    <property type="molecule type" value="Genomic_DNA"/>
</dbReference>
<dbReference type="EMBL" id="U56946">
    <property type="protein sequence ID" value="AAB41066.1"/>
    <property type="molecule type" value="Genomic_DNA"/>
</dbReference>
<dbReference type="EMBL" id="U56947">
    <property type="protein sequence ID" value="AAB41067.1"/>
    <property type="molecule type" value="Genomic_DNA"/>
</dbReference>
<dbReference type="EMBL" id="U56948">
    <property type="protein sequence ID" value="AAB41068.1"/>
    <property type="molecule type" value="Genomic_DNA"/>
</dbReference>
<dbReference type="EMBL" id="U56949">
    <property type="protein sequence ID" value="AAB41069.1"/>
    <property type="molecule type" value="Genomic_DNA"/>
</dbReference>
<dbReference type="EMBL" id="U56950">
    <property type="protein sequence ID" value="AAB41070.1"/>
    <property type="molecule type" value="Genomic_DNA"/>
</dbReference>
<dbReference type="EMBL" id="U56951">
    <property type="protein sequence ID" value="AAB41071.1"/>
    <property type="molecule type" value="Genomic_DNA"/>
</dbReference>
<dbReference type="EMBL" id="U56952">
    <property type="protein sequence ID" value="AAB41072.1"/>
    <property type="molecule type" value="Genomic_DNA"/>
</dbReference>
<dbReference type="EMBL" id="U56953">
    <property type="protein sequence ID" value="AAB41073.1"/>
    <property type="molecule type" value="Genomic_DNA"/>
</dbReference>
<dbReference type="EMBL" id="U56954">
    <property type="protein sequence ID" value="AAB41074.1"/>
    <property type="molecule type" value="Genomic_DNA"/>
</dbReference>
<dbReference type="EMBL" id="U56955">
    <property type="protein sequence ID" value="AAB41075.1"/>
    <property type="molecule type" value="Genomic_DNA"/>
</dbReference>
<dbReference type="EMBL" id="Y16801">
    <property type="protein sequence ID" value="CAA76393.1"/>
    <property type="molecule type" value="Genomic_DNA"/>
</dbReference>
<dbReference type="EMBL" id="Y16802">
    <property type="protein sequence ID" value="CAA76394.1"/>
    <property type="molecule type" value="Genomic_DNA"/>
</dbReference>
<dbReference type="EMBL" id="Y16803">
    <property type="protein sequence ID" value="CAA76395.1"/>
    <property type="molecule type" value="Genomic_DNA"/>
</dbReference>
<dbReference type="EMBL" id="Y16804">
    <property type="protein sequence ID" value="CAA76396.1"/>
    <property type="molecule type" value="Genomic_DNA"/>
</dbReference>
<dbReference type="EMBL" id="Y16805">
    <property type="protein sequence ID" value="CAA76397.1"/>
    <property type="molecule type" value="Genomic_DNA"/>
</dbReference>
<dbReference type="EMBL" id="Y16806">
    <property type="protein sequence ID" value="CAA76398.1"/>
    <property type="molecule type" value="Genomic_DNA"/>
</dbReference>
<dbReference type="EMBL" id="Y16807">
    <property type="protein sequence ID" value="CAA76399.1"/>
    <property type="molecule type" value="Genomic_DNA"/>
</dbReference>
<dbReference type="EMBL" id="Y16808">
    <property type="protein sequence ID" value="CAA76400.1"/>
    <property type="molecule type" value="Genomic_DNA"/>
</dbReference>
<dbReference type="EMBL" id="Y16809">
    <property type="protein sequence ID" value="CAA76401.1"/>
    <property type="molecule type" value="Genomic_DNA"/>
</dbReference>
<dbReference type="EMBL" id="Y16810">
    <property type="protein sequence ID" value="CAA76402.1"/>
    <property type="molecule type" value="Genomic_DNA"/>
</dbReference>
<dbReference type="EMBL" id="Y16811">
    <property type="protein sequence ID" value="CAA76403.1"/>
    <property type="molecule type" value="Genomic_DNA"/>
</dbReference>
<dbReference type="EMBL" id="Y18110">
    <property type="protein sequence ID" value="CAA77029.1"/>
    <property type="molecule type" value="Genomic_DNA"/>
</dbReference>
<dbReference type="EMBL" id="Y18111">
    <property type="protein sequence ID" value="CAA77030.1"/>
    <property type="molecule type" value="Genomic_DNA"/>
</dbReference>
<dbReference type="EMBL" id="Y18112">
    <property type="protein sequence ID" value="CAA77031.1"/>
    <property type="molecule type" value="Genomic_DNA"/>
</dbReference>
<dbReference type="EMBL" id="AF097403">
    <property type="protein sequence ID" value="AAD27006.1"/>
    <property type="molecule type" value="Genomic_DNA"/>
</dbReference>
<dbReference type="EMBL" id="AF097404">
    <property type="protein sequence ID" value="AAD27007.1"/>
    <property type="molecule type" value="Genomic_DNA"/>
</dbReference>
<dbReference type="EMBL" id="AF097405">
    <property type="protein sequence ID" value="AAD27008.1"/>
    <property type="molecule type" value="Genomic_DNA"/>
</dbReference>
<dbReference type="EMBL" id="AF097406">
    <property type="protein sequence ID" value="AAD27009.1"/>
    <property type="molecule type" value="Genomic_DNA"/>
</dbReference>
<dbReference type="EMBL" id="AB015600">
    <property type="protein sequence ID" value="BAA29034.1"/>
    <property type="molecule type" value="Genomic_DNA"/>
</dbReference>
<dbReference type="EMBL" id="AJ563426">
    <property type="protein sequence ID" value="CAD91415.1"/>
    <property type="molecule type" value="Genomic_DNA"/>
</dbReference>
<dbReference type="EMBL" id="AH007168">
    <property type="protein sequence ID" value="AAD01474.1"/>
    <property type="molecule type" value="Genomic_DNA"/>
</dbReference>
<dbReference type="EMBL" id="AH007170">
    <property type="protein sequence ID" value="AAD01476.1"/>
    <property type="molecule type" value="Genomic_DNA"/>
</dbReference>
<dbReference type="EMBL" id="AH007171">
    <property type="protein sequence ID" value="AAD01477.1"/>
    <property type="molecule type" value="Genomic_DNA"/>
</dbReference>
<dbReference type="EMBL" id="AH007173">
    <property type="protein sequence ID" value="AAD01479.1"/>
    <property type="molecule type" value="Genomic_DNA"/>
</dbReference>
<dbReference type="EMBL" id="AH007174">
    <property type="protein sequence ID" value="AAD01480.1"/>
    <property type="molecule type" value="Genomic_DNA"/>
</dbReference>
<dbReference type="EMBL" id="AH007186">
    <property type="protein sequence ID" value="AAD01492.1"/>
    <property type="molecule type" value="Genomic_DNA"/>
</dbReference>
<dbReference type="EMBL" id="AH007175">
    <property type="protein sequence ID" value="AAD01481.1"/>
    <property type="molecule type" value="Genomic_DNA"/>
</dbReference>
<dbReference type="EMBL" id="AH007176">
    <property type="protein sequence ID" value="AAD01482.1"/>
    <property type="molecule type" value="Genomic_DNA"/>
</dbReference>
<dbReference type="EMBL" id="AH007177">
    <property type="protein sequence ID" value="AAD01483.1"/>
    <property type="molecule type" value="Genomic_DNA"/>
</dbReference>
<dbReference type="EMBL" id="AH007178">
    <property type="protein sequence ID" value="AAD01484.1"/>
    <property type="molecule type" value="Genomic_DNA"/>
</dbReference>
<dbReference type="EMBL" id="AH007179">
    <property type="protein sequence ID" value="AAD01485.1"/>
    <property type="molecule type" value="Genomic_DNA"/>
</dbReference>
<dbReference type="EMBL" id="AH007180">
    <property type="protein sequence ID" value="AAD01486.1"/>
    <property type="molecule type" value="Genomic_DNA"/>
</dbReference>
<dbReference type="EMBL" id="AH007182">
    <property type="protein sequence ID" value="AAD01488.1"/>
    <property type="molecule type" value="Genomic_DNA"/>
</dbReference>
<dbReference type="EMBL" id="AH007183">
    <property type="protein sequence ID" value="AAD01489.1"/>
    <property type="molecule type" value="Genomic_DNA"/>
</dbReference>
<dbReference type="EMBL" id="AH007184">
    <property type="protein sequence ID" value="AAD01490.1"/>
    <property type="molecule type" value="Genomic_DNA"/>
</dbReference>
<dbReference type="EMBL" id="AH007185">
    <property type="protein sequence ID" value="AAD01491.1"/>
    <property type="molecule type" value="Genomic_DNA"/>
</dbReference>
<dbReference type="EMBL" id="AH008136">
    <property type="protein sequence ID" value="AAD52060.1"/>
    <property type="molecule type" value="Genomic_DNA"/>
</dbReference>
<dbReference type="EMBL" id="AH008137">
    <property type="protein sequence ID" value="AAD52061.1"/>
    <property type="molecule type" value="Genomic_DNA"/>
</dbReference>
<dbReference type="EMBL" id="AH008138">
    <property type="protein sequence ID" value="AAD52062.1"/>
    <property type="molecule type" value="Genomic_DNA"/>
</dbReference>
<dbReference type="EMBL" id="AH008139">
    <property type="protein sequence ID" value="AAD52063.1"/>
    <property type="molecule type" value="Genomic_DNA"/>
</dbReference>
<dbReference type="EMBL" id="AH008140">
    <property type="protein sequence ID" value="AAD52064.1"/>
    <property type="molecule type" value="Genomic_DNA"/>
</dbReference>
<dbReference type="EMBL" id="AH008141">
    <property type="protein sequence ID" value="AAD52065.1"/>
    <property type="molecule type" value="Genomic_DNA"/>
</dbReference>
<dbReference type="EMBL" id="AH008142">
    <property type="protein sequence ID" value="AAD52066.1"/>
    <property type="molecule type" value="Genomic_DNA"/>
</dbReference>
<dbReference type="EMBL" id="AH008143">
    <property type="protein sequence ID" value="AAD52067.1"/>
    <property type="molecule type" value="Genomic_DNA"/>
</dbReference>
<dbReference type="EMBL" id="AH008144">
    <property type="protein sequence ID" value="AAD52068.1"/>
    <property type="molecule type" value="Genomic_DNA"/>
</dbReference>
<dbReference type="EMBL" id="AH008145">
    <property type="protein sequence ID" value="AAD52069.1"/>
    <property type="molecule type" value="Genomic_DNA"/>
</dbReference>
<dbReference type="EMBL" id="AH008146">
    <property type="protein sequence ID" value="AAD52070.1"/>
    <property type="molecule type" value="Genomic_DNA"/>
</dbReference>
<dbReference type="EMBL" id="AH008147">
    <property type="protein sequence ID" value="AAD52071.1"/>
    <property type="molecule type" value="Genomic_DNA"/>
</dbReference>
<dbReference type="EMBL" id="AH008148">
    <property type="protein sequence ID" value="AAD52072.1"/>
    <property type="molecule type" value="Genomic_DNA"/>
</dbReference>
<dbReference type="EMBL" id="AH007169">
    <property type="protein sequence ID" value="AAD01475.1"/>
    <property type="molecule type" value="Genomic_DNA"/>
</dbReference>
<dbReference type="EMBL" id="AH007172">
    <property type="protein sequence ID" value="AAD01478.1"/>
    <property type="molecule type" value="Genomic_DNA"/>
</dbReference>
<dbReference type="EMBL" id="AH007167">
    <property type="protein sequence ID" value="AAD01473.1"/>
    <property type="molecule type" value="Genomic_DNA"/>
</dbReference>
<dbReference type="EMBL" id="AH007181">
    <property type="protein sequence ID" value="AAD01487.1"/>
    <property type="molecule type" value="Genomic_DNA"/>
</dbReference>
<dbReference type="EMBL" id="AH010819">
    <property type="protein sequence ID" value="AAK58536.1"/>
    <property type="molecule type" value="Genomic_DNA"/>
</dbReference>
<dbReference type="EMBL" id="AH011143">
    <property type="protein sequence ID" value="AAL13171.1"/>
    <property type="molecule type" value="Genomic_DNA"/>
</dbReference>
<dbReference type="EMBL" id="AH010820">
    <property type="protein sequence ID" value="AAK58537.1"/>
    <property type="molecule type" value="Genomic_DNA"/>
</dbReference>
<dbReference type="EMBL" id="AH010821">
    <property type="protein sequence ID" value="AAK58538.1"/>
    <property type="molecule type" value="Genomic_DNA"/>
</dbReference>
<dbReference type="EMBL" id="AH010545">
    <property type="protein sequence ID" value="AAK19622.1"/>
    <property type="molecule type" value="Genomic_DNA"/>
</dbReference>
<dbReference type="EMBL" id="AH010526">
    <property type="protein sequence ID" value="AAK17997.1"/>
    <property type="molecule type" value="Genomic_DNA"/>
</dbReference>
<dbReference type="EMBL" id="AH010568">
    <property type="protein sequence ID" value="AAK25770.1"/>
    <property type="molecule type" value="Genomic_DNA"/>
</dbReference>
<dbReference type="EMBL" id="AH010569">
    <property type="protein sequence ID" value="AAK25771.1"/>
    <property type="molecule type" value="Genomic_DNA"/>
</dbReference>
<dbReference type="EMBL" id="AH010532">
    <property type="protein sequence ID" value="AAK18281.1"/>
    <property type="molecule type" value="Genomic_DNA"/>
</dbReference>
<dbReference type="EMBL" id="AH010546">
    <property type="protein sequence ID" value="AAK19623.1"/>
    <property type="molecule type" value="Genomic_DNA"/>
</dbReference>
<dbReference type="EMBL" id="AH010560">
    <property type="protein sequence ID" value="AAK20897.1"/>
    <property type="molecule type" value="Genomic_DNA"/>
</dbReference>
<dbReference type="EMBL" id="AH010561">
    <property type="protein sequence ID" value="AAK20898.1"/>
    <property type="molecule type" value="Genomic_DNA"/>
</dbReference>
<dbReference type="EMBL" id="AH010587">
    <property type="protein sequence ID" value="AAK27364.1"/>
    <property type="molecule type" value="Genomic_DNA"/>
</dbReference>
<dbReference type="EMBL" id="AH010562">
    <property type="protein sequence ID" value="AAK20899.1"/>
    <property type="molecule type" value="Genomic_DNA"/>
</dbReference>
<dbReference type="EMBL" id="AH010571">
    <property type="protein sequence ID" value="AAK26323.1"/>
    <property type="molecule type" value="Genomic_DNA"/>
</dbReference>
<dbReference type="EMBL" id="AH010572">
    <property type="protein sequence ID" value="AAK26324.1"/>
    <property type="molecule type" value="Genomic_DNA"/>
</dbReference>
<dbReference type="EMBL" id="AH010740">
    <property type="protein sequence ID" value="AAK51140.1"/>
    <property type="molecule type" value="Genomic_DNA"/>
</dbReference>
<dbReference type="EMBL" id="AJ250499">
    <property type="protein sequence ID" value="CAC14280.1"/>
    <property type="molecule type" value="Genomic_DNA"/>
</dbReference>
<dbReference type="EMBL" id="AJ250500">
    <property type="protein sequence ID" value="CAC14281.1"/>
    <property type="molecule type" value="Genomic_DNA"/>
</dbReference>
<dbReference type="EMBL" id="AJ250501">
    <property type="protein sequence ID" value="CAC14282.1"/>
    <property type="molecule type" value="Genomic_DNA"/>
</dbReference>
<dbReference type="EMBL" id="AJ250502">
    <property type="protein sequence ID" value="CAC14283.1"/>
    <property type="molecule type" value="Genomic_DNA"/>
</dbReference>
<dbReference type="EMBL" id="AJ250503">
    <property type="protein sequence ID" value="CAC14284.1"/>
    <property type="molecule type" value="Genomic_DNA"/>
</dbReference>
<dbReference type="EMBL" id="AJ250504">
    <property type="protein sequence ID" value="CAC14285.1"/>
    <property type="molecule type" value="Genomic_DNA"/>
</dbReference>
<dbReference type="EMBL" id="AJ250505">
    <property type="protein sequence ID" value="CAC14286.1"/>
    <property type="molecule type" value="Genomic_DNA"/>
</dbReference>
<dbReference type="EMBL" id="AJ250506">
    <property type="protein sequence ID" value="CAC14287.1"/>
    <property type="molecule type" value="Genomic_DNA"/>
</dbReference>
<dbReference type="EMBL" id="AJ250507">
    <property type="protein sequence ID" value="CAC14288.1"/>
    <property type="molecule type" value="Genomic_DNA"/>
</dbReference>
<dbReference type="EMBL" id="AJ250802">
    <property type="protein sequence ID" value="CAC15380.1"/>
    <property type="molecule type" value="Genomic_DNA"/>
</dbReference>
<dbReference type="EMBL" id="AJ250803">
    <property type="protein sequence ID" value="CAC15381.1"/>
    <property type="molecule type" value="Genomic_DNA"/>
</dbReference>
<dbReference type="EMBL" id="AJ250804">
    <property type="protein sequence ID" value="CAC15382.1"/>
    <property type="molecule type" value="Genomic_DNA"/>
</dbReference>
<dbReference type="EMBL" id="AJ250805">
    <property type="protein sequence ID" value="CAC15383.1"/>
    <property type="molecule type" value="Genomic_DNA"/>
</dbReference>
<dbReference type="EMBL" id="AJ250990">
    <property type="protein sequence ID" value="CAC16142.1"/>
    <property type="molecule type" value="Genomic_DNA"/>
</dbReference>
<dbReference type="EMBL" id="AJ250991">
    <property type="protein sequence ID" value="CAC16143.1"/>
    <property type="molecule type" value="Genomic_DNA"/>
</dbReference>
<dbReference type="EMBL" id="AJ271789">
    <property type="protein sequence ID" value="CAC27561.1"/>
    <property type="molecule type" value="Genomic_DNA"/>
</dbReference>
<dbReference type="EMBL" id="AY603357">
    <property type="protein sequence ID" value="AAV39504.1"/>
    <property type="molecule type" value="Genomic_DNA"/>
</dbReference>
<dbReference type="EMBL" id="AJ249394">
    <property type="protein sequence ID" value="CAB71317.1"/>
    <property type="molecule type" value="Genomic_DNA"/>
</dbReference>
<dbReference type="EMBL" id="AJ295250">
    <property type="protein sequence ID" value="CAC88121.1"/>
    <property type="molecule type" value="Genomic_DNA"/>
</dbReference>
<dbReference type="EMBL" id="AJ295251">
    <property type="protein sequence ID" value="CAC88121.1"/>
    <property type="status" value="JOINED"/>
    <property type="molecule type" value="Genomic_DNA"/>
</dbReference>
<dbReference type="EMBL" id="AJ580805">
    <property type="protein sequence ID" value="CAE45581.1"/>
    <property type="molecule type" value="Genomic_DNA"/>
</dbReference>
<dbReference type="EMBL" id="AJ580806">
    <property type="protein sequence ID" value="CAE45582.2"/>
    <property type="molecule type" value="Genomic_DNA"/>
</dbReference>
<dbReference type="EMBL" id="AH014149">
    <property type="protein sequence ID" value="AAU95382.1"/>
    <property type="molecule type" value="Genomic_DNA"/>
</dbReference>
<dbReference type="EMBL" id="AM899996">
    <property type="protein sequence ID" value="CAP12057.1"/>
    <property type="molecule type" value="Genomic_DNA"/>
</dbReference>
<dbReference type="EMBL" id="EU254723">
    <property type="protein sequence ID" value="ABX54884.1"/>
    <property type="molecule type" value="Genomic_DNA"/>
</dbReference>
<dbReference type="EMBL" id="AM944063">
    <property type="protein sequence ID" value="CAQ16171.1"/>
    <property type="molecule type" value="Genomic_DNA"/>
</dbReference>
<dbReference type="EMBL" id="AH006330">
    <property type="protein sequence ID" value="AAC28941.1"/>
    <property type="molecule type" value="Genomic_DNA"/>
</dbReference>
<dbReference type="EMBL" id="AH006331">
    <property type="protein sequence ID" value="AAC28942.1"/>
    <property type="molecule type" value="Genomic_DNA"/>
</dbReference>
<dbReference type="EMBL" id="AH006332">
    <property type="protein sequence ID" value="AAC28943.1"/>
    <property type="molecule type" value="Genomic_DNA"/>
</dbReference>
<dbReference type="EMBL" id="AH006333">
    <property type="protein sequence ID" value="AAC28944.1"/>
    <property type="molecule type" value="Genomic_DNA"/>
</dbReference>
<dbReference type="EMBL" id="AH006334">
    <property type="protein sequence ID" value="AAC28945.1"/>
    <property type="molecule type" value="Genomic_DNA"/>
</dbReference>
<dbReference type="EMBL" id="AH007472">
    <property type="protein sequence ID" value="AAD19598.1"/>
    <property type="molecule type" value="Genomic_DNA"/>
</dbReference>
<dbReference type="EMBL" id="AH007473">
    <property type="protein sequence ID" value="AAD19599.1"/>
    <property type="molecule type" value="Genomic_DNA"/>
</dbReference>
<dbReference type="EMBL" id="AH007474">
    <property type="protein sequence ID" value="AAD19600.1"/>
    <property type="molecule type" value="Genomic_DNA"/>
</dbReference>
<dbReference type="EMBL" id="AH007475">
    <property type="protein sequence ID" value="AAD19601.1"/>
    <property type="molecule type" value="Genomic_DNA"/>
</dbReference>
<dbReference type="EMBL" id="AH007476">
    <property type="protein sequence ID" value="AAD19602.1"/>
    <property type="molecule type" value="Genomic_DNA"/>
</dbReference>
<dbReference type="EMBL" id="AH007477">
    <property type="protein sequence ID" value="AAD19603.1"/>
    <property type="molecule type" value="Genomic_DNA"/>
</dbReference>
<dbReference type="EMBL" id="AF106652">
    <property type="protein sequence ID" value="AAD19604.1"/>
    <property type="molecule type" value="Genomic_DNA"/>
</dbReference>
<dbReference type="EMBL" id="AF106650">
    <property type="protein sequence ID" value="AAD19604.1"/>
    <property type="status" value="JOINED"/>
    <property type="molecule type" value="Genomic_DNA"/>
</dbReference>
<dbReference type="EMBL" id="AF106651">
    <property type="protein sequence ID" value="AAD19604.1"/>
    <property type="status" value="JOINED"/>
    <property type="molecule type" value="Genomic_DNA"/>
</dbReference>
<dbReference type="EMBL" id="AH007479">
    <property type="protein sequence ID" value="AAD19605.1"/>
    <property type="molecule type" value="Genomic_DNA"/>
</dbReference>
<dbReference type="EMBL" id="EU267602">
    <property type="protein sequence ID" value="ABX60404.1"/>
    <property type="molecule type" value="Genomic_DNA"/>
</dbReference>
<dbReference type="EMBL" id="AY095537">
    <property type="protein sequence ID" value="AAM34484.1"/>
    <property type="molecule type" value="Genomic_DNA"/>
</dbReference>
<dbReference type="PIR" id="A55739">
    <property type="entry name" value="A55739"/>
</dbReference>
<dbReference type="RefSeq" id="NP_000238.1">
    <molecule id="Q29983-1"/>
    <property type="nucleotide sequence ID" value="NM_000247.3"/>
</dbReference>
<dbReference type="PDB" id="1B3J">
    <property type="method" value="X-ray"/>
    <property type="resolution" value="3.00 A"/>
    <property type="chains" value="A=24-297"/>
</dbReference>
<dbReference type="PDB" id="1HYR">
    <property type="method" value="X-ray"/>
    <property type="resolution" value="2.70 A"/>
    <property type="chains" value="C=24-297"/>
</dbReference>
<dbReference type="PDB" id="7FI5">
    <property type="method" value="X-ray"/>
    <property type="resolution" value="2.39 A"/>
    <property type="chains" value="C=24-297"/>
</dbReference>
<dbReference type="PDB" id="7FI6">
    <property type="method" value="X-ray"/>
    <property type="resolution" value="2.90 A"/>
    <property type="chains" value="C=24-297"/>
</dbReference>
<dbReference type="PDB" id="7FI7">
    <property type="method" value="X-ray"/>
    <property type="resolution" value="2.78 A"/>
    <property type="chains" value="C=24-297"/>
</dbReference>
<dbReference type="PDB" id="7FI8">
    <property type="method" value="X-ray"/>
    <property type="resolution" value="2.80 A"/>
    <property type="chains" value="C=24-297"/>
</dbReference>
<dbReference type="PDB" id="7FI9">
    <property type="method" value="X-ray"/>
    <property type="resolution" value="2.16 A"/>
    <property type="chains" value="C=24-297"/>
</dbReference>
<dbReference type="PDB" id="8TLZ">
    <property type="method" value="X-ray"/>
    <property type="resolution" value="2.75 A"/>
    <property type="chains" value="A/B=24-205"/>
</dbReference>
<dbReference type="PDB" id="8TM0">
    <property type="method" value="X-ray"/>
    <property type="resolution" value="3.83 A"/>
    <property type="chains" value="C=24-205"/>
</dbReference>
<dbReference type="PDB" id="8TM2">
    <property type="method" value="X-ray"/>
    <property type="resolution" value="2.85 A"/>
    <property type="chains" value="C=24-205"/>
</dbReference>
<dbReference type="PDBsum" id="1B3J"/>
<dbReference type="PDBsum" id="1HYR"/>
<dbReference type="PDBsum" id="7FI5"/>
<dbReference type="PDBsum" id="7FI6"/>
<dbReference type="PDBsum" id="7FI7"/>
<dbReference type="PDBsum" id="7FI8"/>
<dbReference type="PDBsum" id="7FI9"/>
<dbReference type="PDBsum" id="8TLZ"/>
<dbReference type="PDBsum" id="8TM0"/>
<dbReference type="PDBsum" id="8TM2"/>
<dbReference type="SMR" id="Q29983"/>
<dbReference type="BioGRID" id="319735">
    <property type="interactions" value="115"/>
</dbReference>
<dbReference type="CORUM" id="Q29983"/>
<dbReference type="DIP" id="DIP-29681N"/>
<dbReference type="FunCoup" id="Q29983">
    <property type="interactions" value="506"/>
</dbReference>
<dbReference type="IntAct" id="Q29983">
    <property type="interactions" value="85"/>
</dbReference>
<dbReference type="MINT" id="Q29983"/>
<dbReference type="STRING" id="9606.ENSP00000413079"/>
<dbReference type="BindingDB" id="Q29983"/>
<dbReference type="ChEMBL" id="CHEMBL5483005"/>
<dbReference type="GlyConnect" id="1510">
    <property type="glycosylation" value="2 N-Linked glycans (2 sites)"/>
</dbReference>
<dbReference type="GlyCosmos" id="Q29983">
    <property type="glycosylation" value="6 sites, 2 glycans"/>
</dbReference>
<dbReference type="GlyGen" id="Q29983">
    <property type="glycosylation" value="7 sites, 7 N-linked glycans (6 sites)"/>
</dbReference>
<dbReference type="iPTMnet" id="Q29983"/>
<dbReference type="PhosphoSitePlus" id="Q29983"/>
<dbReference type="SwissPalm" id="Q29983"/>
<dbReference type="BioMuta" id="MICA"/>
<dbReference type="DMDM" id="74740024"/>
<dbReference type="jPOST" id="Q29983"/>
<dbReference type="MassIVE" id="Q29983"/>
<dbReference type="PaxDb" id="9606-ENSP00000413079"/>
<dbReference type="PeptideAtlas" id="Q29983"/>
<dbReference type="ProteomicsDB" id="61284">
    <molecule id="Q29983-1"/>
</dbReference>
<dbReference type="Pumba" id="Q29983"/>
<dbReference type="DNASU" id="100507436"/>
<dbReference type="Ensembl" id="ENST00000400325.5">
    <molecule id="Q29983-1"/>
    <property type="protein sequence ID" value="ENSP00000383179.1"/>
    <property type="gene ID" value="ENSG00000183214.12"/>
</dbReference>
<dbReference type="Ensembl" id="ENST00000418465.5">
    <property type="protein sequence ID" value="ENSP00000402134.1"/>
    <property type="gene ID" value="ENSG00000235233.9"/>
</dbReference>
<dbReference type="Ensembl" id="ENST00000547609.2">
    <molecule id="Q29983-1"/>
    <property type="protein sequence ID" value="ENSP00000446963.1"/>
    <property type="gene ID" value="ENSG00000183214.12"/>
</dbReference>
<dbReference type="GeneID" id="100507436"/>
<dbReference type="KEGG" id="hsa:100507436"/>
<dbReference type="UCSC" id="uc011ind.3">
    <molecule id="Q29983-1"/>
    <property type="organism name" value="human"/>
</dbReference>
<dbReference type="AGR" id="HGNC:7090"/>
<dbReference type="CTD" id="100507436"/>
<dbReference type="DisGeNET" id="100507436"/>
<dbReference type="GeneCards" id="MICA"/>
<dbReference type="HGNC" id="HGNC:7090">
    <property type="gene designation" value="MICA"/>
</dbReference>
<dbReference type="MIM" id="177900">
    <property type="type" value="phenotype"/>
</dbReference>
<dbReference type="MIM" id="600169">
    <property type="type" value="gene"/>
</dbReference>
<dbReference type="MIM" id="607507">
    <property type="type" value="phenotype"/>
</dbReference>
<dbReference type="neXtProt" id="NX_Q29983"/>
<dbReference type="PharmGKB" id="PA30811"/>
<dbReference type="eggNOG" id="ENOG502RU00">
    <property type="taxonomic scope" value="Eukaryota"/>
</dbReference>
<dbReference type="InParanoid" id="Q29983"/>
<dbReference type="OrthoDB" id="9449998at2759"/>
<dbReference type="PAN-GO" id="Q29983">
    <property type="GO annotations" value="3 GO annotations based on evolutionary models"/>
</dbReference>
<dbReference type="PhylomeDB" id="Q29983"/>
<dbReference type="PathwayCommons" id="Q29983"/>
<dbReference type="Reactome" id="R-HSA-198933">
    <property type="pathway name" value="Immunoregulatory interactions between a Lymphoid and a non-Lymphoid cell"/>
</dbReference>
<dbReference type="SignaLink" id="Q29983"/>
<dbReference type="BioGRID-ORCS" id="100507436">
    <property type="hits" value="4 hits in 1115 CRISPR screens"/>
</dbReference>
<dbReference type="ChiTaRS" id="MICA">
    <property type="organism name" value="human"/>
</dbReference>
<dbReference type="EvolutionaryTrace" id="Q29983"/>
<dbReference type="GeneWiki" id="MHC_class_I_polypeptide-related_sequence_A"/>
<dbReference type="GenomeRNAi" id="100507436"/>
<dbReference type="Pharos" id="Q29983">
    <property type="development level" value="Tbio"/>
</dbReference>
<dbReference type="PRO" id="PR:Q29983"/>
<dbReference type="Proteomes" id="UP000005640">
    <property type="component" value="Unplaced"/>
</dbReference>
<dbReference type="RNAct" id="Q29983">
    <property type="molecule type" value="protein"/>
</dbReference>
<dbReference type="GO" id="GO:0009986">
    <property type="term" value="C:cell surface"/>
    <property type="evidence" value="ECO:0000314"/>
    <property type="project" value="UniProtKB"/>
</dbReference>
<dbReference type="GO" id="GO:0005737">
    <property type="term" value="C:cytoplasm"/>
    <property type="evidence" value="ECO:0007669"/>
    <property type="project" value="UniProtKB-SubCell"/>
</dbReference>
<dbReference type="GO" id="GO:0009897">
    <property type="term" value="C:external side of plasma membrane"/>
    <property type="evidence" value="ECO:0000318"/>
    <property type="project" value="GO_Central"/>
</dbReference>
<dbReference type="GO" id="GO:0005615">
    <property type="term" value="C:extracellular space"/>
    <property type="evidence" value="ECO:0000314"/>
    <property type="project" value="BHF-UCL"/>
</dbReference>
<dbReference type="GO" id="GO:0005886">
    <property type="term" value="C:plasma membrane"/>
    <property type="evidence" value="ECO:0000314"/>
    <property type="project" value="BHF-UCL"/>
</dbReference>
<dbReference type="GO" id="GO:0046703">
    <property type="term" value="F:natural killer cell lectin-like receptor binding"/>
    <property type="evidence" value="ECO:0000314"/>
    <property type="project" value="UniProtKB"/>
</dbReference>
<dbReference type="GO" id="GO:0048018">
    <property type="term" value="F:receptor ligand activity"/>
    <property type="evidence" value="ECO:0000314"/>
    <property type="project" value="UniProt"/>
</dbReference>
<dbReference type="GO" id="GO:0042742">
    <property type="term" value="P:defense response to bacterium"/>
    <property type="evidence" value="ECO:0000314"/>
    <property type="project" value="UniProtKB"/>
</dbReference>
<dbReference type="GO" id="GO:0051607">
    <property type="term" value="P:defense response to virus"/>
    <property type="evidence" value="ECO:0000314"/>
    <property type="project" value="UniProtKB"/>
</dbReference>
<dbReference type="GO" id="GO:0006974">
    <property type="term" value="P:DNA damage response"/>
    <property type="evidence" value="ECO:0000314"/>
    <property type="project" value="UniProtKB"/>
</dbReference>
<dbReference type="GO" id="GO:0046629">
    <property type="term" value="P:gamma-delta T cell activation"/>
    <property type="evidence" value="ECO:0000314"/>
    <property type="project" value="UniProtKB"/>
</dbReference>
<dbReference type="GO" id="GO:0006955">
    <property type="term" value="P:immune response"/>
    <property type="evidence" value="ECO:0000318"/>
    <property type="project" value="GO_Central"/>
</dbReference>
<dbReference type="GO" id="GO:0002418">
    <property type="term" value="P:immune response to tumor cell"/>
    <property type="evidence" value="ECO:0000314"/>
    <property type="project" value="UniProtKB"/>
</dbReference>
<dbReference type="GO" id="GO:0031640">
    <property type="term" value="P:killing of cells of another organism"/>
    <property type="evidence" value="ECO:0007669"/>
    <property type="project" value="UniProtKB-KW"/>
</dbReference>
<dbReference type="GO" id="GO:0042267">
    <property type="term" value="P:natural killer cell mediated cytotoxicity"/>
    <property type="evidence" value="ECO:0000314"/>
    <property type="project" value="UniProtKB"/>
</dbReference>
<dbReference type="GO" id="GO:0032815">
    <property type="term" value="P:negative regulation of natural killer cell activation"/>
    <property type="evidence" value="ECO:0000314"/>
    <property type="project" value="CACAO"/>
</dbReference>
<dbReference type="GO" id="GO:0045953">
    <property type="term" value="P:negative regulation of natural killer cell mediated cytotoxicity"/>
    <property type="evidence" value="ECO:0000315"/>
    <property type="project" value="CACAO"/>
</dbReference>
<dbReference type="GO" id="GO:0009408">
    <property type="term" value="P:response to heat"/>
    <property type="evidence" value="ECO:0000314"/>
    <property type="project" value="UniProtKB"/>
</dbReference>
<dbReference type="GO" id="GO:0001913">
    <property type="term" value="P:T cell mediated cytotoxicity"/>
    <property type="evidence" value="ECO:0000314"/>
    <property type="project" value="UniProtKB"/>
</dbReference>
<dbReference type="CDD" id="cd21017">
    <property type="entry name" value="IgC1_MHC_Ia_MIC-A_MIC-B"/>
    <property type="match status" value="1"/>
</dbReference>
<dbReference type="DisProt" id="DP00670"/>
<dbReference type="FunFam" id="3.30.500.10:FF:000003">
    <property type="entry name" value="IgG receptor FcRn large subunit p51"/>
    <property type="match status" value="1"/>
</dbReference>
<dbReference type="FunFam" id="2.60.40.10:FF:000204">
    <property type="entry name" value="Major histocompatibility complex, class I-related protein"/>
    <property type="match status" value="1"/>
</dbReference>
<dbReference type="Gene3D" id="2.60.40.10">
    <property type="entry name" value="Immunoglobulins"/>
    <property type="match status" value="1"/>
</dbReference>
<dbReference type="Gene3D" id="3.30.500.10">
    <property type="entry name" value="MHC class I-like antigen recognition-like"/>
    <property type="match status" value="1"/>
</dbReference>
<dbReference type="InterPro" id="IPR007110">
    <property type="entry name" value="Ig-like_dom"/>
</dbReference>
<dbReference type="InterPro" id="IPR036179">
    <property type="entry name" value="Ig-like_dom_sf"/>
</dbReference>
<dbReference type="InterPro" id="IPR013783">
    <property type="entry name" value="Ig-like_fold"/>
</dbReference>
<dbReference type="InterPro" id="IPR003597">
    <property type="entry name" value="Ig_C1-set"/>
</dbReference>
<dbReference type="InterPro" id="IPR050208">
    <property type="entry name" value="MHC_class-I_related"/>
</dbReference>
<dbReference type="InterPro" id="IPR011161">
    <property type="entry name" value="MHC_I-like_Ag-recog"/>
</dbReference>
<dbReference type="InterPro" id="IPR037055">
    <property type="entry name" value="MHC_I-like_Ag-recog_sf"/>
</dbReference>
<dbReference type="InterPro" id="IPR011162">
    <property type="entry name" value="MHC_I/II-like_Ag-recog"/>
</dbReference>
<dbReference type="PANTHER" id="PTHR16675:SF154">
    <property type="entry name" value="MHC CLASS I POLYPEPTIDE-RELATED SEQUENCE A-RELATED"/>
    <property type="match status" value="1"/>
</dbReference>
<dbReference type="PANTHER" id="PTHR16675">
    <property type="entry name" value="MHC CLASS I-RELATED"/>
    <property type="match status" value="1"/>
</dbReference>
<dbReference type="Pfam" id="PF07654">
    <property type="entry name" value="C1-set"/>
    <property type="match status" value="1"/>
</dbReference>
<dbReference type="Pfam" id="PF00129">
    <property type="entry name" value="MHC_I"/>
    <property type="match status" value="1"/>
</dbReference>
<dbReference type="SMART" id="SM00407">
    <property type="entry name" value="IGc1"/>
    <property type="match status" value="1"/>
</dbReference>
<dbReference type="SUPFAM" id="SSF48726">
    <property type="entry name" value="Immunoglobulin"/>
    <property type="match status" value="1"/>
</dbReference>
<dbReference type="SUPFAM" id="SSF54452">
    <property type="entry name" value="MHC antigen-recognition domain"/>
    <property type="match status" value="1"/>
</dbReference>
<dbReference type="PROSITE" id="PS50835">
    <property type="entry name" value="IG_LIKE"/>
    <property type="match status" value="1"/>
</dbReference>
<evidence type="ECO:0000255" key="1"/>
<evidence type="ECO:0000255" key="2">
    <source>
        <dbReference type="PROSITE-ProRule" id="PRU00114"/>
    </source>
</evidence>
<evidence type="ECO:0000269" key="3">
    <source>
    </source>
</evidence>
<evidence type="ECO:0000269" key="4">
    <source>
    </source>
</evidence>
<evidence type="ECO:0000269" key="5">
    <source>
    </source>
</evidence>
<evidence type="ECO:0000269" key="6">
    <source>
    </source>
</evidence>
<evidence type="ECO:0000269" key="7">
    <source>
    </source>
</evidence>
<evidence type="ECO:0000269" key="8">
    <source>
    </source>
</evidence>
<evidence type="ECO:0000269" key="9">
    <source>
    </source>
</evidence>
<evidence type="ECO:0000269" key="10">
    <source>
    </source>
</evidence>
<evidence type="ECO:0000269" key="11">
    <source>
    </source>
</evidence>
<evidence type="ECO:0000269" key="12">
    <source>
    </source>
</evidence>
<evidence type="ECO:0000269" key="13">
    <source>
    </source>
</evidence>
<evidence type="ECO:0000269" key="14">
    <source>
    </source>
</evidence>
<evidence type="ECO:0000269" key="15">
    <source>
    </source>
</evidence>
<evidence type="ECO:0000269" key="16">
    <source>
    </source>
</evidence>
<evidence type="ECO:0000269" key="17">
    <source>
    </source>
</evidence>
<evidence type="ECO:0000269" key="18">
    <source>
    </source>
</evidence>
<evidence type="ECO:0000269" key="19">
    <source>
    </source>
</evidence>
<evidence type="ECO:0000269" key="20">
    <source>
    </source>
</evidence>
<evidence type="ECO:0000269" key="21">
    <source>
    </source>
</evidence>
<evidence type="ECO:0000269" key="22">
    <source>
    </source>
</evidence>
<evidence type="ECO:0000269" key="23">
    <source>
    </source>
</evidence>
<evidence type="ECO:0000269" key="24">
    <source>
    </source>
</evidence>
<evidence type="ECO:0000269" key="25">
    <source>
    </source>
</evidence>
<evidence type="ECO:0000269" key="26">
    <source>
    </source>
</evidence>
<evidence type="ECO:0000269" key="27">
    <source>
    </source>
</evidence>
<evidence type="ECO:0000269" key="28">
    <source>
    </source>
</evidence>
<evidence type="ECO:0000269" key="29">
    <source>
    </source>
</evidence>
<evidence type="ECO:0000269" key="30">
    <source>
    </source>
</evidence>
<evidence type="ECO:0000269" key="31">
    <source>
    </source>
</evidence>
<evidence type="ECO:0000269" key="32">
    <source>
    </source>
</evidence>
<evidence type="ECO:0000269" key="33">
    <source>
    </source>
</evidence>
<evidence type="ECO:0000303" key="34">
    <source>
    </source>
</evidence>
<evidence type="ECO:0000303" key="35">
    <source>
    </source>
</evidence>
<evidence type="ECO:0000305" key="36"/>
<evidence type="ECO:0000312" key="37">
    <source>
        <dbReference type="EMBL" id="AAA21718.1"/>
    </source>
</evidence>
<evidence type="ECO:0000312" key="38">
    <source>
        <dbReference type="EMBL" id="AAB41069.1"/>
    </source>
</evidence>
<evidence type="ECO:0000312" key="39">
    <source>
        <dbReference type="EMBL" id="AAC28944.1"/>
    </source>
</evidence>
<evidence type="ECO:0000312" key="40">
    <source>
        <dbReference type="EMBL" id="AAD01476.1"/>
    </source>
</evidence>
<evidence type="ECO:0000312" key="41">
    <source>
        <dbReference type="EMBL" id="AAD27009.1"/>
    </source>
</evidence>
<evidence type="ECO:0000312" key="42">
    <source>
        <dbReference type="EMBL" id="AAH16929.1"/>
    </source>
</evidence>
<evidence type="ECO:0000312" key="43">
    <source>
        <dbReference type="EMBL" id="AAK19623.1"/>
    </source>
</evidence>
<evidence type="ECO:0000312" key="44">
    <source>
        <dbReference type="EMBL" id="AAM34484.1"/>
    </source>
</evidence>
<evidence type="ECO:0000312" key="45">
    <source>
        <dbReference type="EMBL" id="AAV39504.1"/>
    </source>
</evidence>
<evidence type="ECO:0000312" key="46">
    <source>
        <dbReference type="EMBL" id="BAA29034.1"/>
    </source>
</evidence>
<evidence type="ECO:0000312" key="47">
    <source>
        <dbReference type="EMBL" id="CAA63427.1"/>
    </source>
</evidence>
<evidence type="ECO:0000312" key="48">
    <source>
        <dbReference type="EMBL" id="CAA76395.1"/>
    </source>
</evidence>
<evidence type="ECO:0000312" key="49">
    <source>
        <dbReference type="EMBL" id="CAB71317.1"/>
    </source>
</evidence>
<evidence type="ECO:0000312" key="50">
    <source>
        <dbReference type="EMBL" id="CAC27561.1"/>
    </source>
</evidence>
<evidence type="ECO:0000312" key="51">
    <source>
        <dbReference type="EMBL" id="CAC88121.1"/>
    </source>
</evidence>
<evidence type="ECO:0000312" key="52">
    <source>
        <dbReference type="EMBL" id="CAD91415.1"/>
    </source>
</evidence>
<evidence type="ECO:0000312" key="53">
    <source>
        <dbReference type="EMBL" id="CAE45582.2"/>
    </source>
</evidence>
<evidence type="ECO:0000312" key="54">
    <source>
        <dbReference type="EMBL" id="CAI41907.1"/>
    </source>
</evidence>
<evidence type="ECO:0000312" key="55">
    <source>
        <dbReference type="EMBL" id="CAP12057.1"/>
    </source>
</evidence>
<evidence type="ECO:0000312" key="56">
    <source>
        <dbReference type="PDB" id="1HYR"/>
    </source>
</evidence>
<evidence type="ECO:0007829" key="57">
    <source>
        <dbReference type="PDB" id="1HYR"/>
    </source>
</evidence>
<evidence type="ECO:0007829" key="58">
    <source>
        <dbReference type="PDB" id="7FI5"/>
    </source>
</evidence>
<evidence type="ECO:0007829" key="59">
    <source>
        <dbReference type="PDB" id="7FI9"/>
    </source>
</evidence>
<organism>
    <name type="scientific">Homo sapiens</name>
    <name type="common">Human</name>
    <dbReference type="NCBI Taxonomy" id="9606"/>
    <lineage>
        <taxon>Eukaryota</taxon>
        <taxon>Metazoa</taxon>
        <taxon>Chordata</taxon>
        <taxon>Craniata</taxon>
        <taxon>Vertebrata</taxon>
        <taxon>Euteleostomi</taxon>
        <taxon>Mammalia</taxon>
        <taxon>Eutheria</taxon>
        <taxon>Euarchontoglires</taxon>
        <taxon>Primates</taxon>
        <taxon>Haplorrhini</taxon>
        <taxon>Catarrhini</taxon>
        <taxon>Hominidae</taxon>
        <taxon>Homo</taxon>
    </lineage>
</organism>
<feature type="signal peptide">
    <location>
        <begin position="1"/>
        <end position="23"/>
    </location>
</feature>
<feature type="chain" id="PRO_0000337146" description="MHC class I polypeptide-related sequence A" evidence="1">
    <location>
        <begin position="24"/>
        <end position="383"/>
    </location>
</feature>
<feature type="topological domain" description="Extracellular" evidence="1">
    <location>
        <begin position="24"/>
        <end position="307"/>
    </location>
</feature>
<feature type="transmembrane region" description="Helical" evidence="1">
    <location>
        <begin position="308"/>
        <end position="328"/>
    </location>
</feature>
<feature type="topological domain" description="Cytoplasmic" evidence="1">
    <location>
        <begin position="329"/>
        <end position="383"/>
    </location>
</feature>
<feature type="domain" description="Ig-like C1-type" evidence="1">
    <location>
        <begin position="207"/>
        <end position="296"/>
    </location>
</feature>
<feature type="lipid moiety-binding region" description="S-palmitoyl cysteine" evidence="29">
    <location>
        <position position="330"/>
    </location>
</feature>
<feature type="lipid moiety-binding region" description="S-palmitoyl cysteine" evidence="29">
    <location>
        <position position="331"/>
    </location>
</feature>
<feature type="glycosylation site" description="N-linked (GlcNAc...) asparagine" evidence="30">
    <location>
        <position position="31"/>
    </location>
</feature>
<feature type="glycosylation site" description="N-linked (GlcNAc...) asparagine" evidence="1">
    <location>
        <position position="79"/>
    </location>
</feature>
<feature type="glycosylation site" description="N-linked (GlcNAc...) asparagine" evidence="1">
    <location>
        <position position="210"/>
    </location>
</feature>
<feature type="glycosylation site" description="N-linked (GlcNAc...) asparagine" evidence="1">
    <location>
        <position position="220"/>
    </location>
</feature>
<feature type="glycosylation site" description="N-linked (GlcNAc...) asparagine" evidence="1">
    <location>
        <position position="261"/>
    </location>
</feature>
<feature type="disulfide bond" evidence="2 6">
    <location>
        <begin position="59"/>
        <end position="64"/>
    </location>
</feature>
<feature type="disulfide bond" evidence="2 6">
    <location>
        <begin position="119"/>
        <end position="187"/>
    </location>
</feature>
<feature type="disulfide bond" evidence="2 6">
    <location>
        <begin position="225"/>
        <end position="282"/>
    </location>
</feature>
<feature type="splice variant" id="VSP_055366" description="In isoform 2." evidence="34">
    <location>
        <begin position="109"/>
        <end position="204"/>
    </location>
</feature>
<feature type="sequence variant" id="VAR_043625" description="In allele MICA*010, allele MICA*025 and allele MICA*054; abolishes cell surface expression, probably by interfering with protein folding; dbSNP:rs9380254." evidence="10">
    <original>R</original>
    <variation>P</variation>
    <location>
        <position position="29"/>
    </location>
</feature>
<feature type="sequence variant" id="VAR_043626" description="In allele MICA*002, allele MICA*011, allele MICA*013, allele MICA*014, allele MICA*015, allele MICA*017, allele MICA*020, allele MICA*022, allele MICA*023, allele MICA*030, allele MICA*034, allele MICA*035, allele MICA*036, allele MICA*041, allele MICA*044, allele MICA*046, allele MICA*047, allele MICA*052, allele MICA*053 and allele MICA*055; dbSNP:rs1063630.">
    <original>W</original>
    <variation>G</variation>
    <location>
        <position position="37"/>
    </location>
</feature>
<feature type="sequence variant" id="VAR_043627" description="In allele MICA*002, allele MICA*004, allele MICA*005, allele MICA*006, allele MICA*007, allele MICA*008, allele MICA*009, allele MICA*010, allele MICA*011, allele MICA*013, allele MICA*014, allele MICA*015, allele MICA*016, allele MICA*017, allele MICA*019, allele MICA*020, allele MICA*022, allele MICA*023, allele MICA*024, allele MICA*025, allele MICA*026, allele MICA*027, allele MICA*028, allele MICA*029, allele MICA*030, allele MICA*031, allele MICA*032, allele MICA*033, allele MICA*034, allele MICA*035, allele MICA*036, allele MICA*037, allele MICA*038, allele MICA*039, allele MICA*040, allele MICA*041, allele MICA*042, allele MICA*043, allele MICA*044, allele MICA*045, allele MICA*046, allele MICA*047, allele MICA*048, allele MICA*049, allele MICA*051, allele MICA*052, allele MICA*053, allele MICA*054, allele MICA*055 and allele MICA*056; dbSNP:rs1051785.">
    <original>T</original>
    <variation>A</variation>
    <location>
        <position position="47"/>
    </location>
</feature>
<feature type="sequence variant" id="VAR_043628" description="In allele MICA*041; dbSNP:rs17200158.">
    <original>V</original>
    <variation>G</variation>
    <location>
        <position position="49"/>
    </location>
</feature>
<feature type="sequence variant" id="VAR_043629" description="In allele MICA*004, allele MICA*005, allele MICA*006, allele MICA*008, allele MICA*009, allele MICA*010, allele MICA*016, allele MICA*019, allele MICA*024, allele MICA*025, allele MICA*027, allele MICA*028, allele MICA*031, allele MICA*032, allele MICA*033, allele MICA*042, allele MICA*044, allele MICA*048, allele MICA*049, allele MICA*051, allele MICA*054 and allele MICA*056; dbSNP:rs1051786.">
    <original>C</original>
    <variation>Y</variation>
    <location>
        <position position="59"/>
    </location>
</feature>
<feature type="sequence variant" id="VAR_043630" description="In allele MICA*017; dbSNP:rs41558312.">
    <original>Q</original>
    <variation>R</variation>
    <location>
        <position position="114"/>
    </location>
</feature>
<feature type="sequence variant" id="VAR_043631" description="In allele MICA*036; dbSNP:rs41557113.">
    <original>R</original>
    <variation>K</variation>
    <location>
        <position position="128"/>
    </location>
</feature>
<feature type="sequence variant" id="VAR_043632" description="In allele MICA*014 and allele MICA*015; dbSNP:rs41556715.">
    <original>G</original>
    <variation>R</variation>
    <location>
        <position position="137"/>
    </location>
</feature>
<feature type="sequence variant" id="VAR_043633" description="In allele MICA*004, allele MICA*006, allele MICA*009, allele MICA*044 and allele MICA*049; dbSNP:rs1051790.">
    <original>L</original>
    <variation>V</variation>
    <location>
        <position position="145"/>
    </location>
</feature>
<feature type="sequence variant" id="VAR_043634" description="In allele MICA*033; dbSNP:rs41539919.">
    <original>T</original>
    <variation>S</variation>
    <location>
        <position position="147"/>
    </location>
</feature>
<feature type="sequence variant" id="VAR_043635" description="In allele MICA*002, allele MICA*004, allele MICA*005, allele MICA*006, allele MICA*007, allele MICA*008, allele MICA*009, allele MICA*010, allele MICA*011, allele MICA*012, allele MICA*013, allele MICA*014, allele MICA*015, allele MICA*016, allele MICA*017, allele MICA*018, allele MICA*019, allele MICA*020, allele MICA*022, allele MICA*023, allele MICA*024, allele MICA*025, allele MICA*026, allele MICA*027, allele MICA*028, allele MICA*029, allele MICA*030, allele MICA*032, allele MICA*033, allele MICA*034, allele MICA*035, allele MICA*036, allele MICA*037, allele MICA*038, allele MICA*039, allele MICA*041, allele MICA*042, allele MICA*043, allele MICA*044, allele MICA*045, allele MICA*046, allele MICA*047, allele MICA*048, allele MICA*049, allele MICA*051, allele MICA*052, allele MICA*053, allele MICA*054, allele MICA*055 and allele MICA*056; dbSNP:rs1051791.">
    <original>K</original>
    <variation>E</variation>
    <location>
        <position position="148"/>
    </location>
</feature>
<feature type="sequence variant" id="VAR_043636" description="In allele MICA*004, allele MICA*005, allele MICA*006, allele MICA*008, allele MICA*009, allele MICA*010, allele MICA*013, allele MICA*016, allele MICA*019, allele MICA*022, allele MICA*024, allele MICA*027, allele MICA*028, allele MICA*033, allele MICA*044, allele MICA*048, allele MICA*049, allele MICA*053, allele MICA*054 and allele MICA*056; reduces binding affinity for KLRK1; dbSNP:rs1051792.">
    <original>M</original>
    <variation>V</variation>
    <location>
        <position position="152"/>
    </location>
</feature>
<feature type="sequence variant" id="VAR_043637" description="In allele MICA*029; dbSNP:rs3819269.">
    <original>V</original>
    <variation>I</variation>
    <location>
        <position position="165"/>
    </location>
</feature>
<feature type="sequence variant" id="VAR_043638" description="In allele MICA*011 and allele MICA*034; dbSNP:rs41560824.">
    <original>M</original>
    <variation>V</variation>
    <location>
        <position position="174"/>
    </location>
</feature>
<feature type="sequence variant" id="VAR_043639" description="In allele MICA*012, allele MICA*032 and allele MICA*043; dbSNP:rs3819268.">
    <original>H</original>
    <variation>L</variation>
    <location>
        <position position="179"/>
    </location>
</feature>
<feature type="sequence variant" id="VAR_043640" description="In allele MICA*004, allele MICA*006, allele MICA*008, allele MICA*009, allele MICA*010, allele MICA*013, allele MICA*014, allele MICA*016, allele MICA*019, allele MICA*022, allele MICA*024, allele MICA*027, allele MICA*028, allele MICA*033, allele MICA*036, allele MICA*044, allele MICA*048, allele MICA*049, allele MICA*053, allele MICA*054 and allele MICA*056; dbSNP:rs1051794.">
    <original>K</original>
    <variation>E</variation>
    <location>
        <position position="196"/>
    </location>
</feature>
<feature type="sequence variant" id="VAR_043641" description="In allele MICA*004, allele MICA*006, allele MICA*009, allele MICA*010, allele MICA*016, allele MICA*019, allele MICA*031, allele MICA*033, allele MICA*036, allele MICA*044, allele MICA*049, allele MICA*054 and allele MICA*056; dbSNP:rs1131896.">
    <original>G</original>
    <variation>S</variation>
    <location>
        <position position="198"/>
    </location>
</feature>
<feature type="sequence variant" id="VAR_043642" description="In allele MICA*006; dbSNP:rs41549718.">
    <original>V</original>
    <variation>I</variation>
    <location>
        <position position="199"/>
    </location>
</feature>
<feature type="sequence variant" id="VAR_043643" description="In allele MICA*004, allele MICA*014, allele MICA*032 and allele MICA*044; dbSNP:rs1131897.">
    <original>T</original>
    <variation>R</variation>
    <location>
        <position position="204"/>
    </location>
</feature>
<feature type="sequence variant" id="VAR_043644" description="In allele MICA*004, allele MICA*005, allele MICA*006, allele MICA*008, allele MICA*009, allele MICA*010, allele MICA*016, allele MICA*019, allele MICA*022, allele MICA*024, allele MICA*027, allele MICA*033, allele MICA*034, allele MICA*035, allele MICA*037, allele MICA*038, allele MICA*039, allele MICA*042, allele MICA*044, allele MICA*048, allele MICA*049, allele MICA*053, allele MICA*054 and allele MICA*056; dbSNP:rs1131898.">
    <original>G</original>
    <variation>S</variation>
    <location>
        <position position="229"/>
    </location>
</feature>
<feature type="sequence variant" id="VAR_043645" description="In allele MICA*046; dbSNP:rs41546915.">
    <original>Y</original>
    <variation>C</variation>
    <location>
        <position position="231"/>
    </location>
</feature>
<feature type="sequence variant" id="VAR_043646" description="In allele MICA*004, allele MICA*005, allele MICA*006, allele MICA*008, allele MICA*009, allele MICA*010, allele MICA*016, allele MICA*019, allele MICA*022, allele MICA*024, allele MICA*027, allele MICA*033, allele MICA*034, allele MICA*035, allele MICA*037, allele MICA*038, allele MICA*039, allele MICA*042, allele MICA*044, allele MICA*048, allele MICA*049, allele MICA*053, allele MICA*054 and allele MICA*056; dbSNP:rs1051798.">
    <original>W</original>
    <variation>R</variation>
    <location>
        <position position="233"/>
    </location>
</feature>
<feature type="sequence variant" id="VAR_043647" description="In allele MICA*008, allele MICA*010, allele MICA*016, allele MICA*019, allele MICA*022, allele MICA*027, allele MICA*033, allele MICA*035, allele MICA*037, allele MICA*039, allele MICA*042, allele MICA*048, allele MICA*053, allele MICA*054 and allele MICA*056; dbSNP:rs1140700.">
    <original>T</original>
    <variation>I</variation>
    <location>
        <position position="236"/>
    </location>
</feature>
<feature type="sequence variant" id="VAR_043648" description="In allele MICA*004, allele MICA*006, allele MICA*008, allele MICA*009, allele MICA*010, allele MICA*016, allele MICA*019, allele MICA*022, allele MICA*024, allele MICA*027, allele MICA*033, allele MICA*034, allele MICA*035, allele MICA*037, allele MICA*038, allele MICA*039, allele MICA*042, allele MICA*044, allele MICA*048, allele MICA*049, allele MICA*053, allele MICA*054 and allele MICA*056; dbSNP:rs1051799.">
    <original>S</original>
    <variation>T</variation>
    <location>
        <position position="238"/>
    </location>
</feature>
<feature type="sequence variant" id="VAR_043649" description="In allele MICA*016 and allele MICA*039; dbSNP:rs41540613.">
    <original>V</original>
    <variation>L</variation>
    <location>
        <position position="244"/>
    </location>
</feature>
<feature type="sequence variant" id="VAR_043869" description="In allele MICA*056; dbSNP:rs72558175.">
    <original>W</original>
    <variation>S</variation>
    <location>
        <position position="253"/>
    </location>
</feature>
<feature type="sequence variant" id="VAR_043650" description="In allele MICA*005, allele MICA*008, allele MICA*010, allele MICA*013, allele MICA*016, allele MICA*019, allele MICA*022, allele MICA*027, allele MICA*033, allele MICA*035, allele MICA*037, allele MICA*039, allele MICA*042, allele MICA*045, allele MICA*048, allele MICA*053, allele MICA*054 and allele MICA*056; dbSNP:rs1063635.">
    <original>Q</original>
    <variation>R</variation>
    <location>
        <position position="274"/>
    </location>
</feature>
<feature type="sequence variant" id="VAR_043651" description="In allele MICA*043; dbSNP:rs41557614.">
    <original>R</original>
    <variation>S</variation>
    <location>
        <position position="279"/>
    </location>
</feature>
<feature type="sequence variant" id="VAR_043652" description="In allele MICA*054; dbSNP:rs61759927.">
    <original>S</original>
    <variation>G</variation>
    <location>
        <position position="291"/>
    </location>
</feature>
<feature type="sequence variant" id="VAR_043653" description="In allele MICA*011, allele MICA*030 and allele MICA*047; dbSNP:rs41553616.">
    <original>P</original>
    <variation>A</variation>
    <location>
        <position position="294"/>
    </location>
</feature>
<feature type="sequence variant" id="VAR_043654" description="In allele MICA*015 and allele MICA*017.">
    <original>VLVLQSHWQTFHVSAVAAAAIFVIIIFYVRCCKKKTSAAEGPELVSLQVLDQHPVGTSDHRDATQLGFQPLMSDLGSTGSTEGA</original>
    <variation>CWCFRVIGRHSMFLLLLLLLLLLLLFLLLLFSTSVVVRRKHQLQRVQSS</variation>
    <location>
        <begin position="300"/>
        <end position="383"/>
    </location>
</feature>
<feature type="sequence variant" id="VAR_043655" description="In allele MICA*008, allele MICA*023, allele MICA*028 and allele MICA*053.">
    <original>AAIFVIIIFYVRCCKKKTSAAEGPELVSLQVLDQHPVGTSDHRDATQLGFQPLMSDLGSTGSTEGA</original>
    <variation>GCCYFCYYYFLCPLL</variation>
    <location>
        <begin position="318"/>
        <end position="383"/>
    </location>
</feature>
<feature type="sequence variant" id="VAR_043656" description="In allele MICA*010, allele MICA*016, allele MICA*019, allele MICA*027, allele MICA*033, allele MICA*048, allele MICA*054 and allele MICA*056.">
    <original>A</original>
    <variation>AA</variation>
    <location>
        <position position="319"/>
    </location>
</feature>
<feature type="sequence variant" id="VAR_043657" description="In allele MICA*004, allele MICA*006, allele MICA*009, allele MICA*011, allele MICA*026, allele MICA*047 and allele MICA*049.">
    <original>A</original>
    <variation>AAA</variation>
    <location>
        <position position="319"/>
    </location>
</feature>
<feature type="sequence variant" id="VAR_043658" description="In allele MICA*050.">
    <original>A</original>
    <variation>AAAA</variation>
    <location>
        <position position="319"/>
    </location>
</feature>
<feature type="sequence variant" id="VAR_043659" description="In allele MICA*055.">
    <original>A</original>
    <variation>AAAAA</variation>
    <location>
        <position position="319"/>
    </location>
</feature>
<feature type="sequence variant" id="VAR_043660" description="In allele MICA*002, allele MICA*041, allele MICA*046 and allele MICA*052.">
    <original>A</original>
    <variation>AAAAAA</variation>
    <location>
        <position position="319"/>
    </location>
</feature>
<feature type="sequence variant" id="VAR_043661" description="In allele MICA*020.">
    <original>A</original>
    <variation>AAAAAAA</variation>
    <location>
        <position position="319"/>
    </location>
</feature>
<feature type="sequence variant" id="VAR_043662" description="In allele MICA*052; dbSNP:rs72558178.">
    <original>V</original>
    <variation>I</variation>
    <location>
        <position position="328"/>
    </location>
</feature>
<feature type="sequence variant" id="VAR_043663" description="In allele MICA*002, allele MICA*011, allele MICA*020, allele MICA*041, allele MICA*043, allele MICA*046, allele MICA*047, allele MICA*050 and allele MICA*052; dbSNP:rs41554412.">
    <original>R</original>
    <variation>C</variation>
    <location>
        <position position="329"/>
    </location>
</feature>
<feature type="sequence variant" id="VAR_043664" description="In allele MICA*049; dbSNP:rs41546114.">
    <original>T</original>
    <variation>M</variation>
    <location>
        <position position="356"/>
    </location>
</feature>
<feature type="sequence variant" id="VAR_043665" description="In allele MICA*004, allele MICA*006, allele MICA*010, allele MICA*011, allele MICA*016, allele MICA*019, allele MICA*048 and allele MICA*049; dbSNP:rs9266825.">
    <original>D</original>
    <variation>A</variation>
    <location>
        <position position="373"/>
    </location>
</feature>
<feature type="sequence variant" id="VAR_043666" description="In allele MICA*011; dbSNP:rs41545814.">
    <original>T</original>
    <variation>A</variation>
    <location>
        <position position="377"/>
    </location>
</feature>
<feature type="sequence variant" id="VAR_043667" description="In allele MICA*018; dbSNP:rs1882.">
    <original>A</original>
    <variation>T</variation>
    <location>
        <position position="383"/>
    </location>
</feature>
<feature type="mutagenesis site" description="Completely restores cell surface expression of a non N-glycosylated MICA." evidence="30">
    <original>T</original>
    <variation>A</variation>
    <location>
        <position position="47"/>
    </location>
</feature>
<feature type="mutagenesis site" description="Complete loss of localization in cholesterol and sphingolipid-enriched microdomains; when associated with S-331." evidence="29">
    <original>C</original>
    <variation>S</variation>
    <location>
        <position position="330"/>
    </location>
</feature>
<feature type="mutagenesis site" description="Complete loss of localization in cholesterol and sphingolipid-enriched microdomains; when associated with S-330." evidence="29">
    <original>C</original>
    <variation>S</variation>
    <location>
        <position position="331"/>
    </location>
</feature>
<feature type="strand" evidence="59">
    <location>
        <begin position="26"/>
        <end position="37"/>
    </location>
</feature>
<feature type="strand" evidence="59">
    <location>
        <begin position="46"/>
        <end position="51"/>
    </location>
</feature>
<feature type="strand" evidence="59">
    <location>
        <begin position="54"/>
        <end position="60"/>
    </location>
</feature>
<feature type="strand" evidence="59">
    <location>
        <begin position="63"/>
        <end position="65"/>
    </location>
</feature>
<feature type="strand" evidence="57">
    <location>
        <begin position="71"/>
        <end position="75"/>
    </location>
</feature>
<feature type="helix" evidence="57">
    <location>
        <begin position="79"/>
        <end position="81"/>
    </location>
</feature>
<feature type="helix" evidence="59">
    <location>
        <begin position="83"/>
        <end position="86"/>
    </location>
</feature>
<feature type="turn" evidence="59">
    <location>
        <begin position="87"/>
        <end position="90"/>
    </location>
</feature>
<feature type="helix" evidence="59">
    <location>
        <begin position="91"/>
        <end position="101"/>
    </location>
</feature>
<feature type="strand" evidence="59">
    <location>
        <begin position="109"/>
        <end position="121"/>
    </location>
</feature>
<feature type="strand" evidence="59">
    <location>
        <begin position="127"/>
        <end position="135"/>
    </location>
</feature>
<feature type="strand" evidence="59">
    <location>
        <begin position="138"/>
        <end position="144"/>
    </location>
</feature>
<feature type="turn" evidence="59">
    <location>
        <begin position="145"/>
        <end position="148"/>
    </location>
</feature>
<feature type="strand" evidence="59">
    <location>
        <begin position="149"/>
        <end position="151"/>
    </location>
</feature>
<feature type="helix" evidence="59">
    <location>
        <begin position="156"/>
        <end position="171"/>
    </location>
</feature>
<feature type="helix" evidence="59">
    <location>
        <begin position="177"/>
        <end position="197"/>
    </location>
</feature>
<feature type="turn" evidence="59">
    <location>
        <begin position="198"/>
        <end position="200"/>
    </location>
</feature>
<feature type="strand" evidence="59">
    <location>
        <begin position="208"/>
        <end position="214"/>
    </location>
</feature>
<feature type="helix" evidence="59">
    <location>
        <begin position="217"/>
        <end position="219"/>
    </location>
</feature>
<feature type="strand" evidence="59">
    <location>
        <begin position="220"/>
        <end position="233"/>
    </location>
</feature>
<feature type="strand" evidence="59">
    <location>
        <begin position="236"/>
        <end position="241"/>
    </location>
</feature>
<feature type="helix" evidence="59">
    <location>
        <begin position="248"/>
        <end position="250"/>
    </location>
</feature>
<feature type="strand" evidence="59">
    <location>
        <begin position="251"/>
        <end position="253"/>
    </location>
</feature>
<feature type="strand" evidence="58">
    <location>
        <begin position="260"/>
        <end position="262"/>
    </location>
</feature>
<feature type="strand" evidence="59">
    <location>
        <begin position="264"/>
        <end position="273"/>
    </location>
</feature>
<feature type="helix" evidence="59">
    <location>
        <begin position="277"/>
        <end position="279"/>
    </location>
</feature>
<feature type="strand" evidence="59">
    <location>
        <begin position="280"/>
        <end position="286"/>
    </location>
</feature>
<feature type="strand" evidence="59">
    <location>
        <begin position="289"/>
        <end position="294"/>
    </location>
</feature>
<protein>
    <recommendedName>
        <fullName>MHC class I polypeptide-related sequence A</fullName>
        <shortName>MIC-A</shortName>
    </recommendedName>
</protein>
<gene>
    <name evidence="54" type="primary">MICA</name>
    <name evidence="35" type="synonym">PERB11.1</name>
</gene>
<accession>Q29983</accession>
<accession>A8KQR0</accession>
<accession>A9LRW5</accession>
<accession>A9QVE0</accession>
<accession>B1VJF1</accession>
<accession>O60917</accession>
<accession>O60918</accession>
<accession>O60919</accession>
<accession>O60920</accession>
<accession>O60933</accession>
<accession>O77956</accession>
<accession>O78150</accession>
<accession>O78151</accession>
<accession>O78152</accession>
<accession>O78153</accession>
<accession>O97987</accession>
<accession>O97988</accession>
<accession>O97989</accession>
<accession>O97990</accession>
<accession>O97991</accession>
<accession>O97992</accession>
<accession>O97993</accession>
<accession>O97994</accession>
<accession>O97995</accession>
<accession>O98234</accession>
<accession>O98235</accession>
<accession>O98236</accession>
<accession>O98237</accession>
<accession>O98238</accession>
<accession>P79506</accession>
<accession>P79507</accession>
<accession>P79508</accession>
<accession>P79509</accession>
<accession>P79510</accession>
<accession>P79511</accession>
<accession>P79512</accession>
<accession>P79513</accession>
<accession>P79514</accession>
<accession>P79515</accession>
<accession>P79516</accession>
<accession>P79517</accession>
<accession>P79518</accession>
<accession>P79519</accession>
<accession>P79520</accession>
<accession>P79521</accession>
<accession>Q5C9P8</accession>
<accession>Q5XM81</accession>
<accession>Q70I48</accession>
<accession>Q70I49</accession>
<accession>Q7JFH9</accession>
<accession>Q7JFI0</accession>
<accession>Q7JFI1</accession>
<accession>Q7JFI2</accession>
<accession>Q7YQ98</accession>
<accession>Q861I1</accession>
<accession>Q95464</accession>
<accession>Q95HA2</accession>
<accession>Q95HD6</accession>
<accession>Q95HN4</accession>
<accession>Q95HN5</accession>
<accession>Q95HN6</accession>
<accession>Q95IB2</accession>
<accession>Q95IY7</accession>
<accession>Q99692</accession>
<accession>Q9BCR3</accession>
<accession>Q9BCR4</accession>
<accession>Q9BCR5</accession>
<accession>Q9BCR6</accession>
<accession>Q9BCR7</accession>
<accession>Q9BCR8</accession>
<accession>Q9BCR9</accession>
<accession>Q9BCS0</accession>
<accession>Q9BCS1</accession>
<accession>Q9BCS2</accession>
<accession>Q9BCS3</accession>
<accession>Q9BCS4</accession>
<accession>Q9BD20</accession>
<accession>Q9GIZ1</accession>
<accession>Q9GIZ2</accession>
<accession>Q9GIZ3</accession>
<accession>Q9GIZ4</accession>
<accession>Q9GIZ5</accession>
<accession>Q9GIZ6</accession>
<accession>Q9GJ01</accession>
<accession>Q9GJ02</accession>
<accession>Q9GJ03</accession>
<accession>Q9GJ04</accession>
<accession>Q9GJ05</accession>
<accession>Q9GJ06</accession>
<accession>Q9GJ07</accession>
<accession>Q9GJ08</accession>
<accession>Q9GJ09</accession>
<accession>Q9MY21</accession>
<accession>Q9TQ86</accession>
<accession>Q9TQ87</accession>
<accession>Q9TQ88</accession>
<accession>Q9TQ89</accession>
<accession>Q9TQ92</accession>
<accession>Q9TQ93</accession>
<accession>Q9TQ94</accession>
<accession>Q9TQ95</accession>
<accession>Q9TQ96</accession>
<accession>Q9TQ97</accession>
<accession>Q9TQ98</accession>
<accession>Q9TQ99</accession>
<accession>Q9TQA0</accession>
<accession>Q9TQA1</accession>
<accession>Q9TQA2</accession>
<accession>Q9TQA3</accession>
<accession>Q9TQA4</accession>
<accession>Q9TQI9</accession>
<accession>Q9TQJ0</accession>
<accession>Q9TQJ1</accession>
<accession>Q9TQJ9</accession>
<accession>Q9TQK0</accession>
<accession>Q9TQK1</accession>
<accession>Q9TQK2</accession>
<accession>Q9TQK8</accession>
<accession>Q9TQK9</accession>
<accession>Q9TQL0</accession>
<accession>Q9TQL1</accession>
<accession>Q9TQL2</accession>
<accession>Q9TQL3</accession>
<accession>Q9TQL4</accession>
<accession>Q9UE04</accession>
<accession>Q9UE05</accession>
<accession>Q9UE06</accession>
<accession>Q9UE11</accession>
<keyword id="KW-0002">3D-structure</keyword>
<keyword id="KW-1064">Adaptive immunity</keyword>
<keyword id="KW-0025">Alternative splicing</keyword>
<keyword id="KW-1003">Cell membrane</keyword>
<keyword id="KW-0204">Cytolysis</keyword>
<keyword id="KW-0963">Cytoplasm</keyword>
<keyword id="KW-1015">Disulfide bond</keyword>
<keyword id="KW-0325">Glycoprotein</keyword>
<keyword id="KW-0945">Host-virus interaction</keyword>
<keyword id="KW-0391">Immunity</keyword>
<keyword id="KW-0393">Immunoglobulin domain</keyword>
<keyword id="KW-0449">Lipoprotein</keyword>
<keyword id="KW-0472">Membrane</keyword>
<keyword id="KW-0564">Palmitate</keyword>
<keyword id="KW-1267">Proteomics identification</keyword>
<keyword id="KW-1185">Reference proteome</keyword>
<keyword id="KW-0732">Signal</keyword>
<keyword id="KW-0812">Transmembrane</keyword>
<keyword id="KW-1133">Transmembrane helix</keyword>
<keyword id="KW-0832">Ubl conjugation</keyword>
<reference evidence="36 37" key="1">
    <citation type="journal article" date="1994" name="Proc. Natl. Acad. Sci. U.S.A.">
        <title>A second lineage of mammalian major histocompatibility complex class I genes.</title>
        <authorList>
            <person name="Bahram S."/>
            <person name="Bresnahan M."/>
            <person name="Geraghty D.E."/>
            <person name="Spies T."/>
        </authorList>
    </citation>
    <scope>NUCLEOTIDE SEQUENCE [MRNA] (ALLELE MICA*001)</scope>
</reference>
<reference evidence="36 47" key="2">
    <citation type="journal article" date="1996" name="Immunogenetics">
        <title>Nucleotide sequence of the human MHC class I MICA gene.</title>
        <authorList>
            <person name="Bahram S."/>
            <person name="Mizuki N."/>
            <person name="Inoko H."/>
            <person name="Spies T."/>
        </authorList>
    </citation>
    <scope>NUCLEOTIDE SEQUENCE [GENOMIC DNA] (ALLELE MICA*004)</scope>
</reference>
<reference evidence="54" key="3">
    <citation type="journal article" date="2003" name="Nature">
        <title>The DNA sequence and analysis of human chromosome 6.</title>
        <authorList>
            <person name="Mungall A.J."/>
            <person name="Palmer S.A."/>
            <person name="Sims S.K."/>
            <person name="Edwards C.A."/>
            <person name="Ashurst J.L."/>
            <person name="Wilming L."/>
            <person name="Jones M.C."/>
            <person name="Horton R."/>
            <person name="Hunt S.E."/>
            <person name="Scott C.E."/>
            <person name="Gilbert J.G.R."/>
            <person name="Clamp M.E."/>
            <person name="Bethel G."/>
            <person name="Milne S."/>
            <person name="Ainscough R."/>
            <person name="Almeida J.P."/>
            <person name="Ambrose K.D."/>
            <person name="Andrews T.D."/>
            <person name="Ashwell R.I.S."/>
            <person name="Babbage A.K."/>
            <person name="Bagguley C.L."/>
            <person name="Bailey J."/>
            <person name="Banerjee R."/>
            <person name="Barker D.J."/>
            <person name="Barlow K.F."/>
            <person name="Bates K."/>
            <person name="Beare D.M."/>
            <person name="Beasley H."/>
            <person name="Beasley O."/>
            <person name="Bird C.P."/>
            <person name="Blakey S.E."/>
            <person name="Bray-Allen S."/>
            <person name="Brook J."/>
            <person name="Brown A.J."/>
            <person name="Brown J.Y."/>
            <person name="Burford D.C."/>
            <person name="Burrill W."/>
            <person name="Burton J."/>
            <person name="Carder C."/>
            <person name="Carter N.P."/>
            <person name="Chapman J.C."/>
            <person name="Clark S.Y."/>
            <person name="Clark G."/>
            <person name="Clee C.M."/>
            <person name="Clegg S."/>
            <person name="Cobley V."/>
            <person name="Collier R.E."/>
            <person name="Collins J.E."/>
            <person name="Colman L.K."/>
            <person name="Corby N.R."/>
            <person name="Coville G.J."/>
            <person name="Culley K.M."/>
            <person name="Dhami P."/>
            <person name="Davies J."/>
            <person name="Dunn M."/>
            <person name="Earthrowl M.E."/>
            <person name="Ellington A.E."/>
            <person name="Evans K.A."/>
            <person name="Faulkner L."/>
            <person name="Francis M.D."/>
            <person name="Frankish A."/>
            <person name="Frankland J."/>
            <person name="French L."/>
            <person name="Garner P."/>
            <person name="Garnett J."/>
            <person name="Ghori M.J."/>
            <person name="Gilby L.M."/>
            <person name="Gillson C.J."/>
            <person name="Glithero R.J."/>
            <person name="Grafham D.V."/>
            <person name="Grant M."/>
            <person name="Gribble S."/>
            <person name="Griffiths C."/>
            <person name="Griffiths M.N.D."/>
            <person name="Hall R."/>
            <person name="Halls K.S."/>
            <person name="Hammond S."/>
            <person name="Harley J.L."/>
            <person name="Hart E.A."/>
            <person name="Heath P.D."/>
            <person name="Heathcott R."/>
            <person name="Holmes S.J."/>
            <person name="Howden P.J."/>
            <person name="Howe K.L."/>
            <person name="Howell G.R."/>
            <person name="Huckle E."/>
            <person name="Humphray S.J."/>
            <person name="Humphries M.D."/>
            <person name="Hunt A.R."/>
            <person name="Johnson C.M."/>
            <person name="Joy A.A."/>
            <person name="Kay M."/>
            <person name="Keenan S.J."/>
            <person name="Kimberley A.M."/>
            <person name="King A."/>
            <person name="Laird G.K."/>
            <person name="Langford C."/>
            <person name="Lawlor S."/>
            <person name="Leongamornlert D.A."/>
            <person name="Leversha M."/>
            <person name="Lloyd C.R."/>
            <person name="Lloyd D.M."/>
            <person name="Loveland J.E."/>
            <person name="Lovell J."/>
            <person name="Martin S."/>
            <person name="Mashreghi-Mohammadi M."/>
            <person name="Maslen G.L."/>
            <person name="Matthews L."/>
            <person name="McCann O.T."/>
            <person name="McLaren S.J."/>
            <person name="McLay K."/>
            <person name="McMurray A."/>
            <person name="Moore M.J.F."/>
            <person name="Mullikin J.C."/>
            <person name="Niblett D."/>
            <person name="Nickerson T."/>
            <person name="Novik K.L."/>
            <person name="Oliver K."/>
            <person name="Overton-Larty E.K."/>
            <person name="Parker A."/>
            <person name="Patel R."/>
            <person name="Pearce A.V."/>
            <person name="Peck A.I."/>
            <person name="Phillimore B.J.C.T."/>
            <person name="Phillips S."/>
            <person name="Plumb R.W."/>
            <person name="Porter K.M."/>
            <person name="Ramsey Y."/>
            <person name="Ranby S.A."/>
            <person name="Rice C.M."/>
            <person name="Ross M.T."/>
            <person name="Searle S.M."/>
            <person name="Sehra H.K."/>
            <person name="Sheridan E."/>
            <person name="Skuce C.D."/>
            <person name="Smith S."/>
            <person name="Smith M."/>
            <person name="Spraggon L."/>
            <person name="Squares S.L."/>
            <person name="Steward C.A."/>
            <person name="Sycamore N."/>
            <person name="Tamlyn-Hall G."/>
            <person name="Tester J."/>
            <person name="Theaker A.J."/>
            <person name="Thomas D.W."/>
            <person name="Thorpe A."/>
            <person name="Tracey A."/>
            <person name="Tromans A."/>
            <person name="Tubby B."/>
            <person name="Wall M."/>
            <person name="Wallis J.M."/>
            <person name="West A.P."/>
            <person name="White S.S."/>
            <person name="Whitehead S.L."/>
            <person name="Whittaker H."/>
            <person name="Wild A."/>
            <person name="Willey D.J."/>
            <person name="Wilmer T.E."/>
            <person name="Wood J.M."/>
            <person name="Wray P.W."/>
            <person name="Wyatt J.C."/>
            <person name="Young L."/>
            <person name="Younger R.M."/>
            <person name="Bentley D.R."/>
            <person name="Coulson A."/>
            <person name="Durbin R.M."/>
            <person name="Hubbard T."/>
            <person name="Sulston J.E."/>
            <person name="Dunham I."/>
            <person name="Rogers J."/>
            <person name="Beck S."/>
        </authorList>
    </citation>
    <scope>NUCLEOTIDE SEQUENCE [LARGE SCALE GENOMIC DNA] (ALLELES MICA*001 AND MICA*004)</scope>
</reference>
<reference evidence="36 42" key="4">
    <citation type="journal article" date="2004" name="Genome Res.">
        <title>The status, quality, and expansion of the NIH full-length cDNA project: the Mammalian Gene Collection (MGC).</title>
        <authorList>
            <consortium name="The MGC Project Team"/>
        </authorList>
    </citation>
    <scope>NUCLEOTIDE SEQUENCE [LARGE SCALE MRNA] (ALLELE MICA*018)</scope>
    <scope>NUCLEOTIDE SEQUENCE [LARGE SCALE MRNA] OF 70-248 (ISOFORM 2)</scope>
    <source>
        <tissue>Bone</tissue>
        <tissue evidence="42">Kidney</tissue>
    </source>
</reference>
<reference evidence="36" key="5">
    <citation type="journal article" date="1994" name="Immunogenetics">
        <title>A new polymorphic and multicopy MHC gene family related to nonmammalian class I.</title>
        <authorList>
            <person name="Leelayuwat C."/>
            <person name="Townend D.C."/>
            <person name="Degli-Esposti M.A."/>
            <person name="Abraham L.J."/>
            <person name="Dawkins R.L."/>
        </authorList>
    </citation>
    <scope>NUCLEOTIDE SEQUENCE [GENOMIC DNA] OF 23-150 (ALLELES MICA*001; MICA*008 AND MICA*010)</scope>
</reference>
<reference evidence="36 38" key="6">
    <citation type="journal article" date="1996" name="Immunogenetics">
        <title>Allelic repertoire of the human MHC class I MICA gene.</title>
        <authorList>
            <person name="Fodil N."/>
            <person name="Laloux L."/>
            <person name="Wanner V."/>
            <person name="Pellet P."/>
            <person name="Hauptmann G."/>
            <person name="Mizuki N."/>
            <person name="Inoko H."/>
            <person name="Spies T."/>
            <person name="Theodorou I."/>
            <person name="Bahram S."/>
        </authorList>
    </citation>
    <scope>NUCLEOTIDE SEQUENCE [GENOMIC DNA] OF 24-297 (ALLELES MICA*001; MICA*002; MICA*004; MICA*005; MICA*006; MICA*007; MICA*008; MICA*009; MICA*010; MICA*011; MICA*012; MICA*013; MICA*014; MICA*015 AND MICA*016)</scope>
</reference>
<reference evidence="36 48" key="7">
    <citation type="journal article" date="1999" name="Eur. J. Immunogenet.">
        <title>Definition of new alleles of MIC-A using sequencing-based typing.</title>
        <authorList>
            <person name="Yao Z."/>
            <person name="Volgger A."/>
            <person name="Helmberg W."/>
            <person name="Keller E."/>
            <person name="Fan L.A."/>
            <person name="Chandanayingyong D."/>
            <person name="Albert E.D."/>
        </authorList>
    </citation>
    <scope>NUCLEOTIDE SEQUENCE [GENOMIC DNA] OF 24-297 (ALLELES MICA*007; MICA*008; MICA*009; MICA*010; MICA*012; MICA*016; MICA*017; MICA*018; MICA*022; MICA*024; MICA*025; MICA*028 AND MICA*029)</scope>
</reference>
<reference evidence="36 41" key="8">
    <citation type="journal article" date="1999" name="Immunogenetics">
        <title>MICA haplotypic diversity.</title>
        <authorList>
            <person name="Fodil N."/>
            <person name="Pellet P."/>
            <person name="Laloux L."/>
            <person name="Hauptmann G."/>
            <person name="Theodorou I."/>
            <person name="Bahram S."/>
        </authorList>
    </citation>
    <scope>NUCLEOTIDE SEQUENCE [GENOMIC DNA] OF 24-297 (ALLELES MICA*009; MICA*017; MICA*018 AND MICA*019)</scope>
</reference>
<reference evidence="36 46" key="9">
    <citation type="journal article" date="1999" name="Immunogenetics">
        <title>MIC-A polymorphism in Japanese and a MIC-A-MIC-B null haplotype.</title>
        <authorList>
            <person name="Komatsu-Wakui M."/>
            <person name="Tokunaga K."/>
            <person name="Ishikawa Y."/>
            <person name="Kashiwase K."/>
            <person name="Moriyama S."/>
            <person name="Tsuchiya N."/>
            <person name="Ando H."/>
            <person name="Shiina T."/>
            <person name="Geraghty D.E."/>
            <person name="Inoko H."/>
            <person name="Juji T."/>
        </authorList>
    </citation>
    <scope>NUCLEOTIDE SEQUENCE [GENOMIC DNA] OF 24-297 (ALLELE MICA*019)</scope>
</reference>
<reference evidence="36 52" key="10">
    <citation type="journal article" date="2004" name="Tissue Antigens">
        <title>Identification of a novel MICA allele: MICA*051.</title>
        <authorList>
            <person name="Quiroga I."/>
            <person name="Sweeney D."/>
            <person name="Sutton P.M."/>
            <person name="Chapple S.D."/>
            <person name="Souto-Grando J.P."/>
            <person name="Barnardo M.C.N.M."/>
            <person name="Fuggle S.V."/>
        </authorList>
    </citation>
    <scope>NUCLEOTIDE SEQUENCE [GENOMIC DNA] OF 24-297 (ALLELE MICA*051)</scope>
    <source>
        <tissue evidence="52">Blood</tissue>
    </source>
</reference>
<reference evidence="36 40" key="11">
    <citation type="journal article" date="1999" name="Immunogenetics">
        <title>Sequencing-based typing of MICA reveals 33 alleles: a study on linkage with classical HLA genes.</title>
        <authorList>
            <person name="Visser C.J.T."/>
            <person name="Tilanus M.G.J."/>
            <person name="Tatari Z."/>
            <person name="van der Zwan A.-W."/>
            <person name="Bakker R."/>
            <person name="Rozemuller E.H."/>
            <person name="Schaeffer V."/>
            <person name="Tamouza R."/>
            <person name="Charron D."/>
        </authorList>
    </citation>
    <scope>NUCLEOTIDE SEQUENCE [GENOMIC DNA] OF 25-383 (ALLELES MICA*008; MICA*023 AND MICA*028)</scope>
    <scope>NUCLEOTIDE SEQUENCE [GENOMIC DNA] OF 25-341 (ALLELES MICA*001; MICA*002; MICA*004; MICA*006; MICA*007; MICA*009; MICA*010; MICA*011; MICA*016; MICA*018; MICA*019; MICA*022; MICA*024; MICA*025; MICA*026; MICA*027; MICA*031; MICA*032; MICA*033; MICA*034; MICA*035; MICA*036; MICA*037; MICA*038; MICA*039 AND MICA*040)</scope>
</reference>
<reference evidence="36 43" key="12">
    <citation type="journal article" date="2001" name="Tissue Antigens">
        <title>Identification of MICA alleles with a long Leu-repeat in the transmembrane region and no cytoplasmic tail due to a frameshift-deletion in exon 4.</title>
        <authorList>
            <person name="Obuchi N."/>
            <person name="Takahashi M."/>
            <person name="Nouchi T."/>
            <person name="Satoh M."/>
            <person name="Arimura T."/>
            <person name="Ueda K."/>
            <person name="Akai J."/>
            <person name="Ota M."/>
            <person name="Naruse T."/>
            <person name="Inoko H."/>
            <person name="Numano F."/>
            <person name="Kimura A."/>
        </authorList>
    </citation>
    <scope>NUCLEOTIDE SEQUENCE [GENOMIC DNA] OF 25-383 (ALLELES MICA*001; MICA*002; MICA*006; MICA*008; MICA*009; MICA*010; MICA*011; MICA*012; MICA*015; MICA*016; MICA*017; MICA*018; MICA*019; MICA*048 AND MICA*049)</scope>
</reference>
<reference evidence="36 50" key="13">
    <citation type="journal article" date="2002" name="Eur. J. Immunogenet.">
        <title>Further polymorphism of the MICA gene.</title>
        <authorList>
            <person name="Perez-Rodriguez M."/>
            <person name="Arguello J.R."/>
            <person name="Fischer G."/>
            <person name="Corell A."/>
            <person name="Cox S.T."/>
            <person name="Robinson J."/>
            <person name="Hossain E."/>
            <person name="McWhinnie A."/>
            <person name="Travers P.J."/>
            <person name="Marsh S.G.E."/>
            <person name="Madrigal J.A."/>
        </authorList>
    </citation>
    <scope>NUCLEOTIDE SEQUENCE [GENOMIC DNA] OF 25-371 (ALLELES MICA*008; MICA*017; MICA*018; MICA*019; MICA*027; MICA*029; MICA*033; MICA*041; MICA*043; MICA*045 AND MICA*046)</scope>
</reference>
<reference evidence="36 45" key="14">
    <citation type="submission" date="2004-04" db="EMBL/GenBank/DDBJ databases">
        <title>MIC-A sequence in AH8.2.</title>
        <authorList>
            <person name="Kaur G."/>
            <person name="Shiina T."/>
            <person name="Hashimoto N."/>
            <person name="Kumar N."/>
            <person name="Inoko H."/>
            <person name="Mehra N.K."/>
        </authorList>
    </citation>
    <scope>NUCLEOTIDE SEQUENCE [GENOMIC DNA] OF 25-371 (ALLELE MICA*008)</scope>
</reference>
<reference evidence="36 49" key="15">
    <citation type="journal article" date="2000" name="Tissue Antigens">
        <title>A new MICA allele with ten alanine residues in the exon 5 microsatellite.</title>
        <authorList>
            <person name="Perez-Rodriguez M."/>
            <person name="Corell A."/>
            <person name="Fischer G."/>
            <person name="Arguello R."/>
            <person name="Cox S.T."/>
            <person name="McWhinnie A."/>
            <person name="Marsh S.G.E."/>
            <person name="Madrigal A."/>
        </authorList>
    </citation>
    <scope>NUCLEOTIDE SEQUENCE [GENOMIC DNA] OF 25-341 (ALLELE MICA*020)</scope>
</reference>
<reference evidence="36 51" key="16">
    <citation type="journal article" date="2002" name="Tissue Antigens">
        <title>Identification of a new MICA allele, MICA*047.</title>
        <authorList>
            <person name="Perez-Rodriguez M."/>
            <person name="Raimondi E."/>
            <person name="Marsh S.G.E."/>
            <person name="Madrigal J.A."/>
        </authorList>
    </citation>
    <scope>NUCLEOTIDE SEQUENCE [GENOMIC DNA] OF 25-341 (ALLELE MICA*047)</scope>
</reference>
<reference evidence="36 53" key="17">
    <citation type="journal article" date="2006" name="Tissue Antigens">
        <title>The identification of three novel MICA alleles by sequence-based typing.</title>
        <authorList>
            <person name="Quiroga I."/>
            <person name="Sweeney D."/>
            <person name="Sutton P.M."/>
            <person name="Ahmad T."/>
            <person name="Walton R."/>
            <person name="Barnardo M.C.N.M."/>
            <person name="Fuggle S.V."/>
        </authorList>
    </citation>
    <scope>NUCLEOTIDE SEQUENCE [GENOMIC DNA] OF 25-341 (ALLELES MICA*007; MICA*018 AND MICA*053)</scope>
</reference>
<reference evidence="36 45" key="18">
    <citation type="submission" date="2004-09" db="EMBL/GenBank/DDBJ databases">
        <title>Description of a new MICA allele.</title>
        <authorList>
            <person name="Mas V."/>
            <person name="Amezaga N."/>
            <person name="Arostegui J.I."/>
            <person name="Masso M."/>
            <person name="Plaza S."/>
            <person name="Rius F."/>
            <person name="Ercilla G."/>
            <person name="Vives J."/>
            <person name="Yague J."/>
        </authorList>
    </citation>
    <scope>NUCLEOTIDE SEQUENCE [GENOMIC DNA] OF 25-341 (ALLELE MICA*052)</scope>
</reference>
<reference evidence="36 45" key="19">
    <citation type="submission" date="2007-10" db="EMBL/GenBank/DDBJ databases">
        <title>Description of a novel MICA allele, MICA*010v, discovered by sequencing based typing.</title>
        <authorList>
            <person name="Cox S.T."/>
        </authorList>
    </citation>
    <scope>NUCLEOTIDE SEQUENCE [GENOMIC DNA] OF 25-341 (ALLELE MICA*054)</scope>
    <source>
        <tissue evidence="55">Blood</tissue>
    </source>
</reference>
<reference evidence="36 45" key="20">
    <citation type="submission" date="2007-10" db="EMBL/GenBank/DDBJ databases">
        <title>MICA*TM A8: a new allele with eight GCT repeats in the exon 5 microsatellite.</title>
        <authorList>
            <person name="Glas J."/>
            <person name="Maier K."/>
            <person name="Wetzke M."/>
            <person name="Henninger M."/>
            <person name="Euba A."/>
            <person name="Weiss E.H."/>
            <person name="Folwaczny M."/>
        </authorList>
    </citation>
    <scope>NUCLEOTIDE SEQUENCE [GENOMIC DNA] OF 25-341 (ALLELE MICA*055)</scope>
</reference>
<reference evidence="36 45" key="21">
    <citation type="submission" date="2008-02" db="EMBL/GenBank/DDBJ databases">
        <title>Sequence of new MICA allele, similar to MICA*019.</title>
        <authorList>
            <person name="Cox S.T."/>
        </authorList>
    </citation>
    <scope>NUCLEOTIDE SEQUENCE [GENOMIC DNA] OF 25-341 (ALLELE MICA*056)</scope>
</reference>
<reference evidence="36 39" key="22">
    <citation type="journal article" date="1999" name="Immunogenetics">
        <title>Population study of allelic diversity in the human MHC class I-related MIC-A gene.</title>
        <authorList>
            <person name="Petersdorf E.W."/>
            <person name="Shuler K.B."/>
            <person name="Longton G.M."/>
            <person name="Spies T."/>
            <person name="Hansen J.A."/>
        </authorList>
    </citation>
    <scope>NUCLEOTIDE SEQUENCE [GENOMIC DNA] OF 25-297 (ALLELES MICA*009; MICA*017; MICA*018; MICA*019 AND MICA*030)</scope>
</reference>
<reference evidence="36 45" key="23">
    <citation type="submission" date="1998-11" db="EMBL/GenBank/DDBJ databases">
        <title>New alleles of human non-classical class I MICA gene.</title>
        <authorList>
            <person name="Hirose T."/>
            <person name="Mitsuishi Y."/>
            <person name="Young C."/>
        </authorList>
    </citation>
    <scope>NUCLEOTIDE SEQUENCE [GENOMIC DNA] OF 25-297 (ALLELES MICA*008; MICA*012; MICA*041; MICA*042; MICA*043; MICA*044 AND MICA*045)</scope>
</reference>
<reference evidence="36 45" key="24">
    <citation type="submission" date="2007-11" db="EMBL/GenBank/DDBJ databases">
        <title>Identification of a novel MICA allele by SBT.</title>
        <authorList>
            <person name="Yan L."/>
            <person name="Zhu F."/>
        </authorList>
    </citation>
    <scope>NUCLEOTIDE SEQUENCE [GENOMIC DNA] OF 25-283 (ALLELE MICA*019)</scope>
</reference>
<reference evidence="36 44" key="25">
    <citation type="journal article" date="2002" name="Tissue Antigens">
        <title>A new allele within the transmembrane region of the human MICA gene with seven GCT repeats.</title>
        <authorList>
            <person name="Rueda B."/>
            <person name="Pascual M."/>
            <person name="Lopez-Nevot M.A."/>
            <person name="Gonzalez E."/>
            <person name="Martin J."/>
        </authorList>
    </citation>
    <scope>NUCLEOTIDE SEQUENCE [GENOMIC DNA] OF 299-341 (ALLELE MICA*050)</scope>
</reference>
<reference evidence="36" key="26">
    <citation type="journal article" date="1996" name="Proc. Natl. Acad. Sci. U.S.A.">
        <title>Cell stress-regulated human major histocompatibility complex class I gene expressed in gastrointestinal epithelium.</title>
        <authorList>
            <person name="Groh V."/>
            <person name="Bahram S."/>
            <person name="Bauer S."/>
            <person name="Herman A."/>
            <person name="Beauchamp M."/>
            <person name="Spies T."/>
        </authorList>
    </citation>
    <scope>SUBUNIT</scope>
    <scope>SUBCELLULAR LOCATION</scope>
    <scope>TISSUE SPECIFICITY</scope>
    <scope>INDUCTION</scope>
    <scope>GLYCOSYLATION</scope>
</reference>
<reference evidence="36" key="27">
    <citation type="journal article" date="1998" name="Immunogenetics">
        <title>MICA, a new polymorphic HLA-related antigen, is expressed mainly by keratinocytes, endothelial cells, and monocytes.</title>
        <authorList>
            <person name="Zwirner N.W."/>
            <person name="Fernandez-Vina M.A."/>
            <person name="Stastny P."/>
        </authorList>
    </citation>
    <scope>SUBUNIT</scope>
    <scope>TISSUE SPECIFICITY</scope>
</reference>
<reference evidence="36" key="28">
    <citation type="journal article" date="1998" name="Science">
        <title>Recognition of stress-induced MHC molecules by intestinal epithelial gammadelta T cells.</title>
        <authorList>
            <person name="Groh V."/>
            <person name="Steinle A."/>
            <person name="Bauer S."/>
            <person name="Spies T."/>
        </authorList>
    </citation>
    <scope>FUNCTION</scope>
    <scope>INDUCTION</scope>
</reference>
<reference evidence="36" key="29">
    <citation type="journal article" date="1999" name="Arthritis Rheum.">
        <title>The MICA-A9 triplet repeat polymorphism in the transmembrane region confers additional susceptibility to the development of psoriatic arthritis and is independent of the association of Cw*0602 in psoriasis.</title>
        <authorList>
            <person name="Gonzalez S."/>
            <person name="Martinez-Borra J."/>
            <person name="Torre-Alonso J.C."/>
            <person name="Gonzalez-Roces S."/>
            <person name="Sanchez del Rio J."/>
            <person name="Rodriguez Perez A."/>
            <person name="Brautbar C."/>
            <person name="Lopez-Larrea C."/>
        </authorList>
    </citation>
    <scope>INVOLVEMENT IN PSORIATIC ARTHRITIS SUSCEPTIBILITY</scope>
</reference>
<reference evidence="36" key="30">
    <citation type="journal article" date="1999" name="Hum. Immunol.">
        <title>Differential surface expression of MICA by endothelial cells, fibroblasts, keratinocytes, and monocytes.</title>
        <authorList>
            <person name="Zwirner N.W."/>
            <person name="Dole K."/>
            <person name="Stastny P."/>
        </authorList>
    </citation>
    <scope>SUBCELLULAR LOCATION</scope>
    <scope>TISSUE SPECIFICITY</scope>
</reference>
<reference evidence="36" key="31">
    <citation type="journal article" date="1999" name="Proc. Natl. Acad. Sci. U.S.A.">
        <title>Broad tumor-associated expression and recognition by tumor-derived gamma delta T cells of MICA and MICB.</title>
        <authorList>
            <person name="Groh V."/>
            <person name="Rhinehart R."/>
            <person name="Secrist H."/>
            <person name="Bauer S."/>
            <person name="Grabstein K.H."/>
            <person name="Spies T."/>
        </authorList>
    </citation>
    <scope>TISSUE SPECIFICITY</scope>
</reference>
<reference evidence="36" key="32">
    <citation type="journal article" date="1999" name="Science">
        <title>Activation of NK cells and T cells by NKG2D, a receptor for stress-inducible MICA.</title>
        <authorList>
            <person name="Bauer S."/>
            <person name="Groh V."/>
            <person name="Wu J."/>
            <person name="Steinle A."/>
            <person name="Phillips J.H."/>
            <person name="Lanier L.L."/>
            <person name="Spies T."/>
        </authorList>
    </citation>
    <scope>FUNCTION</scope>
    <scope>INTERACTION WITH KLRK1</scope>
</reference>
<reference evidence="36" key="33">
    <citation type="journal article" date="1999" name="Science">
        <title>An activating immunoreceptor complex formed by NKG2D and DAP10.</title>
        <authorList>
            <person name="Wu J."/>
            <person name="Song Y."/>
            <person name="Bakker A.B.H."/>
            <person name="Bauer S."/>
            <person name="Spies T."/>
            <person name="Lanier L.L."/>
            <person name="Phillips J.H."/>
        </authorList>
    </citation>
    <scope>SUBUNIT</scope>
</reference>
<reference evidence="36" key="34">
    <citation type="journal article" date="2000" name="Clin. Exp. Immunol.">
        <title>PERB11 (MIC): a polymorphic MHC gene is expressed in skin and single nucleotide polymorphisms are associated with psoriasis.</title>
        <authorList>
            <person name="Tay G.K."/>
            <person name="Hui J."/>
            <person name="Gaudieri S."/>
            <person name="Schmitt-Egenolf M."/>
            <person name="Martinez O.P."/>
            <person name="Leelayuwat C."/>
            <person name="Williamson J.F."/>
            <person name="Eiermann T.H."/>
            <person name="Dawkins R.L."/>
        </authorList>
    </citation>
    <scope>TISSUE SPECIFICITY</scope>
    <scope>ASSOCIATION WITH PSORIASIS</scope>
</reference>
<reference evidence="36" key="35">
    <citation type="journal article" date="2000" name="Hum. Immunol.">
        <title>Identification of MICA as a new polymorphic alloantigen recognized by antibodies in sera of organ transplant recipients.</title>
        <authorList>
            <person name="Zwirner N.W."/>
            <person name="Marcos C.Y."/>
            <person name="Mirbaha F."/>
            <person name="Zou Y."/>
            <person name="Stastny P."/>
        </authorList>
    </citation>
    <scope>IDENTIFICATION AS AN ALLOANTIGEN</scope>
</reference>
<reference key="36">
    <citation type="journal article" date="2002" name="J. Immunol.">
        <title>UL16-binding proteins, novel MHC class I-related proteins, bind to NKG2D and activate multiple signaling pathways in primary NK cells.</title>
        <authorList>
            <person name="Sutherland C.L."/>
            <person name="Chalupny N.J."/>
            <person name="Schooley K."/>
            <person name="VandenBos T."/>
            <person name="Kubin M."/>
            <person name="Cosman D."/>
        </authorList>
    </citation>
    <scope>FUNCTION AS A LIGAND FOR KLRK1</scope>
</reference>
<reference key="37">
    <citation type="journal article" date="2009" name="J. Virol.">
        <title>NKG2D ligand MICA is retained in the cis-Golgi apparatus by human cytomegalovirus protein UL142.</title>
        <authorList>
            <person name="Ashiru O."/>
            <person name="Bennett N.J."/>
            <person name="Boyle L.H."/>
            <person name="Thomas M."/>
            <person name="Trowsdale J."/>
            <person name="Wills M.R."/>
        </authorList>
    </citation>
    <scope>INTERACTION WITH HHV-5 PROTEIN UL142 (MICROBIAL INFECTION)</scope>
</reference>
<reference evidence="36" key="38">
    <citation type="journal article" date="2000" name="Immunogenetics">
        <title>A single amino acid substitution causes loss of expression of a MICA allele.</title>
        <authorList>
            <person name="Li Z."/>
            <person name="Groh V."/>
            <person name="Strong R.K."/>
            <person name="Spies T."/>
        </authorList>
    </citation>
    <scope>VARIANT PRO-29</scope>
</reference>
<reference evidence="36" key="39">
    <citation type="journal article" date="2001" name="Immunity">
        <title>MICA engagement by human Vgamma2Vdelta2 T cells enhances their antigen-dependent effector function.</title>
        <authorList>
            <person name="Das H."/>
            <person name="Groh V."/>
            <person name="Kuijl C."/>
            <person name="Sugita M."/>
            <person name="Morita C.T."/>
            <person name="Spies T."/>
            <person name="Bukowski J.F."/>
        </authorList>
    </citation>
    <scope>INDUCTION</scope>
</reference>
<reference evidence="36" key="40">
    <citation type="journal article" date="2001" name="Immunogenetics">
        <title>Interactions of human NKG2D with its ligands MICA, MICB, and homologs of the mouse RAE-1 protein family.</title>
        <authorList>
            <person name="Steinle A."/>
            <person name="Li P."/>
            <person name="Morris D.L."/>
            <person name="Groh V."/>
            <person name="Lanier L.L."/>
            <person name="Strong R.K."/>
            <person name="Spies T."/>
        </authorList>
    </citation>
    <scope>FUNCTION</scope>
    <scope>INTERACTION WITH KLRK1</scope>
    <scope>EFFECT OF VARIANT VAL-152 ON BINDING TO KLRK1</scope>
</reference>
<reference evidence="36" key="41">
    <citation type="journal article" date="2001" name="Nat. Immunol.">
        <title>Costimulation of CD8alphabeta T cells by NKG2D via engagement by MIC induced on virus-infected cells.</title>
        <authorList>
            <person name="Groh V."/>
            <person name="Rhinehart R."/>
            <person name="Randolph-Habecker J."/>
            <person name="Topp M.S."/>
            <person name="Riddell S.R."/>
            <person name="Spies T."/>
        </authorList>
    </citation>
    <scope>FUNCTION AS A LIGAND FOR KLRK1</scope>
    <scope>INDUCTION</scope>
</reference>
<reference evidence="36" key="42">
    <citation type="journal article" date="2002" name="Immunogenetics">
        <title>Alternatively spliced forms of MICA and MICB lacking exon 3 in a human cell line and evidence of presence of similar RNA in human peripheral blood mononuclear cells.</title>
        <authorList>
            <person name="Zou Y."/>
            <person name="Stastny P."/>
        </authorList>
    </citation>
    <scope>ALTERNATIVE SPLICING (ISOFORMS 1 AND 2)</scope>
</reference>
<reference evidence="36" key="43">
    <citation type="journal article" date="2002" name="J. Immunol.">
        <title>Down-regulation of MICA on human tumors by proteolytic shedding.</title>
        <authorList>
            <person name="Salih H.R."/>
            <person name="Rammensee H.-G."/>
            <person name="Steinle A."/>
        </authorList>
    </citation>
    <scope>PROTEOLYTIC CLEAVAGE ON TUMOR CELLS</scope>
</reference>
<reference evidence="36" key="44">
    <citation type="journal article" date="2002" name="Nature">
        <title>Tumour-derived soluble MIC ligands impair expression of NKG2D and T-cell activation.</title>
        <authorList>
            <person name="Groh V."/>
            <person name="Wu J."/>
            <person name="Yee C."/>
            <person name="Spies T."/>
        </authorList>
    </citation>
    <scope>PROTEOLYTIC CLEAVAGE ON TUMOR CELLS</scope>
</reference>
<reference evidence="36" key="45">
    <citation type="journal article" date="2002" name="Proc. Natl. Acad. Sci. U.S.A.">
        <title>Binding of Escherichia coli adhesin AfaE to CD55 triggers cell-surface expression of the MHC class I-related molecule MICA.</title>
        <authorList>
            <person name="Tieng V."/>
            <person name="Le Bouguenec C."/>
            <person name="du Merle L."/>
            <person name="Bertheau P."/>
            <person name="Desreumaux P."/>
            <person name="Janin A."/>
            <person name="Charron D."/>
            <person name="Toubert A."/>
        </authorList>
    </citation>
    <scope>INDUCTION</scope>
</reference>
<reference evidence="36" key="46">
    <citation type="journal article" date="2003" name="J. Immunol.">
        <title>Potential role of NKG2D/MHC class I-related chain A interaction in intrathymic maturation of single-positive CD8 T cells.</title>
        <authorList>
            <person name="Hue S."/>
            <person name="Monteiro R.C."/>
            <person name="Berrih-Aknin S."/>
            <person name="Caillat-Zucman S."/>
        </authorList>
    </citation>
    <scope>TISSUE SPECIFICITY</scope>
</reference>
<reference evidence="36" key="47">
    <citation type="journal article" date="2005" name="Nature">
        <title>The DNA damage pathway regulates innate immune system ligands of the NKG2D receptor.</title>
        <authorList>
            <person name="Gasser S."/>
            <person name="Orsulic S."/>
            <person name="Brown E.J."/>
            <person name="Raulet D.H."/>
        </authorList>
    </citation>
    <scope>INDUCTION</scope>
</reference>
<reference evidence="36" key="48">
    <citation type="journal article" date="2006" name="Biochem. Biophys. Res. Commun.">
        <title>Down-regulation of the NKG2D ligand MICA by the human cytomegalovirus glycoprotein UL142.</title>
        <authorList>
            <person name="Chalupny N.J."/>
            <person name="Rein-Weston A."/>
            <person name="Dosch S."/>
            <person name="Cosman D."/>
        </authorList>
    </citation>
    <scope>INDUCTION</scope>
</reference>
<reference evidence="36" key="49">
    <citation type="journal article" date="2007" name="Nature">
        <title>Disulphide-isomerase-enabled shedding of tumour-associated NKG2D ligands.</title>
        <authorList>
            <person name="Kaiser B.K."/>
            <person name="Yim D."/>
            <person name="Chow I.-T."/>
            <person name="Gonzalez S."/>
            <person name="Dai Z."/>
            <person name="Mann H.H."/>
            <person name="Strong R.K."/>
            <person name="Groh V."/>
            <person name="Spies T."/>
        </authorList>
    </citation>
    <scope>INTERACTION WITH PDIA6</scope>
</reference>
<reference evidence="36" key="50">
    <citation type="journal article" date="2007" name="PLoS ONE">
        <title>In vivo expression pattern of MICA and MICB and its relevance to auto-immunity and cancer.</title>
        <authorList>
            <person name="Schrambach S."/>
            <person name="Ardizzone M."/>
            <person name="Leymarie V."/>
            <person name="Sibilia J."/>
            <person name="Bahram S."/>
        </authorList>
    </citation>
    <scope>TISSUE SPECIFICITY</scope>
</reference>
<reference evidence="36" key="51">
    <citation type="journal article" date="2008" name="J. Virol.">
        <title>Adenovirus E3/19K promotes evasion of NK cell recognition by intracellular sequestration of the NKG2D ligands MICA and MICB.</title>
        <authorList>
            <person name="McSharry B.P."/>
            <person name="Burgert H.-G."/>
            <person name="Owen D.P."/>
            <person name="Stanton R.J."/>
            <person name="Prod'homme V."/>
            <person name="Sester M."/>
            <person name="Koebernick K."/>
            <person name="Groh V."/>
            <person name="Spies T."/>
            <person name="Cox S.T."/>
            <person name="Little A.-M."/>
            <person name="Wang E.C.Y."/>
            <person name="Tomasec P."/>
            <person name="Wilkinson G.W."/>
        </authorList>
    </citation>
    <scope>SUBCELLULAR LOCATION</scope>
    <scope>INDUCTION</scope>
</reference>
<reference key="52">
    <citation type="journal article" date="2008" name="Proc. Natl. Acad. Sci. U.S.A.">
        <title>Down-regulation of NKG2D and NKp80 ligands by Kaposi's sarcoma-associated herpesvirus K5 protects against NK cell cytotoxicity.</title>
        <authorList>
            <person name="Thomas M."/>
            <person name="Boname J.M."/>
            <person name="Field S."/>
            <person name="Nejentsev S."/>
            <person name="Salio M."/>
            <person name="Cerundolo V."/>
            <person name="Wills M."/>
            <person name="Lehner P.J."/>
        </authorList>
    </citation>
    <scope>FUNCTION</scope>
    <scope>UBIQUITINATION BY HUMAN HERPESVIRUS 8 PROTEIN K5 (MICROBIAL INFECTION)</scope>
</reference>
<reference evidence="36" key="53">
    <citation type="journal article" date="2008" name="Proc. Natl. Acad. Sci. U.S.A.">
        <title>MHC class I chain-related protein A antibodies and shedding are associated with the progression of multiple myeloma.</title>
        <authorList>
            <person name="Jinushi M."/>
            <person name="Vanneman M."/>
            <person name="Munshi N.C."/>
            <person name="Tai Y.-T."/>
            <person name="Prabhala R.H."/>
            <person name="Ritz J."/>
            <person name="Neuberg D."/>
            <person name="Anderson K.C."/>
            <person name="Carrasco D.R."/>
            <person name="Dranoff G."/>
        </authorList>
    </citation>
    <scope>INVOLVEMENT IN MULTIPLE MYELOMA</scope>
</reference>
<reference key="54">
    <citation type="journal article" date="2011" name="Eur. J. Immunol.">
        <title>Palmitoylation of MICA, a ligand for NKG2D, mediates its recruitment to membrane microdomains and promotes its shedding.</title>
        <authorList>
            <person name="Agueera-Gonzalez S."/>
            <person name="Gross C.C."/>
            <person name="Fernandez-Messina L."/>
            <person name="Ashiru O."/>
            <person name="Esteso G."/>
            <person name="Hang H.C."/>
            <person name="Reyburn H.T."/>
            <person name="Long E.O."/>
            <person name="Vales-Gomez M."/>
        </authorList>
    </citation>
    <scope>PALMITOYLATION AT CYS-330 AND CYS-331</scope>
    <scope>SUBCELLULAR LOCATION</scope>
    <scope>MUTAGENESIS OF CYS-330 AND CYS-331</scope>
</reference>
<reference key="55">
    <citation type="journal article" date="2014" name="J. Biol. Chem.">
        <title>N-glycosylation of asparagine 8 regulates surface expression of major histocompatibility complex class I chain-related protein A (MICA) alleles dependent on threonine 24.</title>
        <authorList>
            <person name="Mellergaard M."/>
            <person name="Skovbakke S.L."/>
            <person name="Schneider C.L."/>
            <person name="Lauridsen F."/>
            <person name="Andresen L."/>
            <person name="Jensen H."/>
            <person name="Skov S."/>
        </authorList>
    </citation>
    <scope>GLYCOSYLATION AT ASN-31</scope>
    <scope>MUTAGENESIS OF THR-47</scope>
</reference>
<reference evidence="36" key="56">
    <citation type="journal article" date="1999" name="Immunity">
        <title>Crystal structure of the MHC class I homolog MIC-A, a gammadelta T cell ligand.</title>
        <authorList>
            <person name="Li P."/>
            <person name="Willie S.T."/>
            <person name="Bauer S."/>
            <person name="Morris D.L."/>
            <person name="Spies T."/>
            <person name="Strong R.K."/>
        </authorList>
    </citation>
    <scope>X-RAY CRYSTALLOGRAPHY (3.0 ANGSTROMS) OF 24-297</scope>
    <scope>DISULFIDE BONDS</scope>
</reference>
<reference evidence="36 56" key="57">
    <citation type="journal article" date="2001" name="Nat. Immunol.">
        <title>Complex structure of the activating immunoreceptor NKG2D and its MHC class I-like ligand MICA.</title>
        <authorList>
            <person name="Li P."/>
            <person name="Morris D.L."/>
            <person name="Willcox B.E."/>
            <person name="Steinle A."/>
            <person name="Spies T."/>
            <person name="Strong R.K."/>
        </authorList>
    </citation>
    <scope>X-RAY CRYSTALLOGRAPHY (2.7 ANGSTROMS) OF 24-297 IN COMPLEX WITH KLRK1</scope>
</reference>
<sequence length="383" mass="42915">MGLGPVFLLLAGIFPFAPPGAAAEPHSLRYNLTVLSWDGSVQSGFLTEVHLDGQPFLRCDRQKCRAKPQGQWAEDVLGNKTWDRETRDLTGNGKDLRMTLAHIKDQKEGLHSLQEIRVCEIHEDNSTRSSQHFYYDGELFLSQNLETKEWTMPQSSRAQTLAMNVRNFLKEDAMKTKTHYHAMHADCLQELRRYLKSGVVLRRTVPPMVNVTRSEASEGNITVTCRASGFYPWNITLSWRQDGVSLSHDTQQWGDVLPDGNGTYQTWVATRICQGEEQRFTCYMEHSGNHSTHPVPSGKVLVLQSHWQTFHVSAVAAAAIFVIIIFYVRCCKKKTSAAEGPELVSLQVLDQHPVGTSDHRDATQLGFQPLMSDLGSTGSTEGA</sequence>